<gene>
    <name type="primary">Trpv1</name>
    <name type="synonym">Vr1</name>
    <name type="synonym">Vr1l</name>
</gene>
<reference key="1">
    <citation type="journal article" date="1997" name="Nature">
        <title>The capsaicin receptor: a heat-activated ion channel in the pain pathway.</title>
        <authorList>
            <person name="Caterina M.J."/>
            <person name="Schumacher M.A."/>
            <person name="Tominaga M."/>
            <person name="Rosen T.A."/>
            <person name="Levine J.D."/>
            <person name="Julius D."/>
        </authorList>
    </citation>
    <scope>NUCLEOTIDE SEQUENCE [MRNA] (ISOFORM 1)</scope>
    <scope>FUNCTION</scope>
    <scope>SUBCELLULAR LOCATION</scope>
    <scope>TISSUE SPECIFICITY</scope>
    <scope>TRANSPORTER ACTIVITY</scope>
    <source>
        <tissue>Spinal ganglion</tissue>
    </source>
</reference>
<reference key="2">
    <citation type="journal article" date="2000" name="J. Biol. Chem.">
        <title>Molecular cloning of an N-terminal splice variant of the capsaicin receptor. Loss of N-terminal domain suggests functional divergence among capsaicin receptor subtypes.</title>
        <authorList>
            <person name="Schumacher M.A."/>
            <person name="Moff I."/>
            <person name="Sudanagunta S.P."/>
            <person name="Levine J.D."/>
        </authorList>
    </citation>
    <scope>NUCLEOTIDE SEQUENCE [MRNA] (ISOFORM 3)</scope>
    <scope>TISSUE SPECIFICITY</scope>
    <scope>FUNCTION (ISOFORM 3)</scope>
    <source>
        <strain>Sprague-Dawley</strain>
        <tissue>Spinal ganglion</tissue>
        <tissue>Trigeminal ganglion</tissue>
    </source>
</reference>
<reference key="3">
    <citation type="journal article" date="2001" name="Neurosci. Lett.">
        <title>Propofol activates vanilloid receptor channels expressed in human embryonic kidney 293 cells.</title>
        <authorList>
            <person name="Tsutsumi S."/>
            <person name="Tomioka A."/>
            <person name="Sudo M."/>
            <person name="Nakamura A."/>
            <person name="Shirakura K."/>
            <person name="Takagishi K."/>
            <person name="Kohama K."/>
        </authorList>
    </citation>
    <scope>NUCLEOTIDE SEQUENCE [MRNA] (ISOFORMS 1 AND 2)</scope>
    <scope>FUNCTION</scope>
    <scope>SUBCELLULAR LOCATION</scope>
    <scope>TRANSPORTER ACTIVITY</scope>
</reference>
<reference key="4">
    <citation type="journal article" date="2001" name="Genomics">
        <title>The genomic organization of the gene encoding the vanilloid receptor: evidence for multiple splice variants.</title>
        <authorList>
            <person name="Xue Q."/>
            <person name="Yu Y."/>
            <person name="Trilk S.L."/>
            <person name="Jong B.E."/>
            <person name="Schumacher M.A."/>
        </authorList>
    </citation>
    <scope>NUCLEOTIDE SEQUENCE [GENOMIC DNA] OF 1-468</scope>
    <scope>ALTERNATIVE SPLICING</scope>
    <source>
        <strain>Sprague-Dawley</strain>
    </source>
</reference>
<reference key="5">
    <citation type="journal article" date="2000" name="J. Biol. Chem.">
        <title>Identification of an aspartic residue in the P-loop of the vanilloid receptor that modulates pore properties.</title>
        <authorList>
            <person name="Garcia-Martinez C."/>
            <person name="Morenilla-Palao C."/>
            <person name="Planells-Cases R."/>
            <person name="Merino J.M."/>
            <person name="Ferrer-Montiel A.V."/>
        </authorList>
    </citation>
    <scope>CHARACTERIZATION OF CHANNEL PORE</scope>
    <scope>MUTAGENESIS OF GLU-636; LYS-639; MET-644; ASP-646; GLU-648 AND GLU-651</scope>
</reference>
<reference key="6">
    <citation type="journal article" date="2000" name="Nature">
        <title>Induction of vanilloid receptor channel activity by protein kinase C.</title>
        <authorList>
            <person name="Premkumar L.S."/>
            <person name="Ahern G.P."/>
        </authorList>
    </citation>
    <scope>FUNCTION</scope>
    <scope>TRANSPORTER ACTIVITY</scope>
</reference>
<reference key="7">
    <citation type="journal article" date="2001" name="Eur. J. Biochem.">
        <title>Biochemical characterization of the vanilloid receptor 1 expressed in a dorsal root ganglia derived cell line.</title>
        <authorList>
            <person name="Jahnel R."/>
            <person name="Dreger M."/>
            <person name="Gillen C."/>
            <person name="Bender O."/>
            <person name="Kurreck J."/>
            <person name="Hucho F."/>
        </authorList>
    </citation>
    <scope>SUBCELLULAR LOCATION</scope>
    <scope>GLYCOSYLATION AT ASN-604</scope>
</reference>
<reference key="8">
    <citation type="journal article" date="2001" name="Nature">
        <title>Bradykinin and nerve growth factor release the capsaicin receptor from PtdIns(4,5)P2-mediated inhibition.</title>
        <authorList>
            <person name="Chuang H.H."/>
            <person name="Prescott E.D."/>
            <person name="Kong H."/>
            <person name="Shields S."/>
            <person name="Jordt S.E."/>
            <person name="Basbaum A.I."/>
            <person name="Chao M.V."/>
            <person name="Julius D."/>
        </authorList>
    </citation>
    <scope>FUNCTION</scope>
    <scope>INTERACTION WITH PRKCG AND NTRK1</scope>
</reference>
<reference key="9">
    <citation type="journal article" date="2002" name="J. Biol. Chem.">
        <title>Direct phosphorylation of capsaicin receptor VR1 by protein kinase Cepsilon and identification of two target serine residues.</title>
        <authorList>
            <person name="Numazaki M."/>
            <person name="Tominaga T."/>
            <person name="Toyooka H."/>
            <person name="Tominaga M."/>
        </authorList>
    </citation>
    <scope>PHOSPHORYLATION AT SER-502 AND SER-800</scope>
    <scope>MUTAGENESIS OF SER-502 AND SER-800</scope>
</reference>
<reference key="10">
    <citation type="journal article" date="2002" name="J. Biol. Chem.">
        <title>Protein kinase C(alpha) is required for vanilloid receptor 1 activation. Evidence for multiple signaling pathways.</title>
        <authorList>
            <person name="Olah Z."/>
            <person name="Karai L."/>
            <person name="Iadarola M.J."/>
        </authorList>
    </citation>
    <scope>FUNCTION</scope>
    <scope>TRANSPORTER ACTIVITY</scope>
</reference>
<reference key="11">
    <citation type="journal article" date="2002" name="Neuron">
        <title>cAMP-dependent protein kinase regulates desensitization of the capsaicin receptor (VR1) by direct phosphorylation.</title>
        <authorList>
            <person name="Bhave G."/>
            <person name="Zhu W."/>
            <person name="Wang H."/>
            <person name="Brasier D.J."/>
            <person name="Oxford G.S."/>
            <person name="Gereau R.W. IV"/>
        </authorList>
    </citation>
    <scope>FUNCTION</scope>
    <scope>PHOSPHORYLATION AT SER-116; THR-144; THR-370; SER-502; SER-774 AND SER-820</scope>
    <scope>TRANSPORTER ACTIVITY</scope>
</reference>
<reference key="12">
    <citation type="journal article" date="2003" name="Proc. Natl. Acad. Sci. U.S.A.">
        <title>Structural determinant of TRPV1 desensitization interacts with calmodulin.</title>
        <authorList>
            <person name="Numazaki M."/>
            <person name="Tominaga T."/>
            <person name="Takeuchi K."/>
            <person name="Murayama N."/>
            <person name="Toyooka H."/>
            <person name="Tominaga M."/>
        </authorList>
    </citation>
    <scope>FUNCTION</scope>
    <scope>INTERACTION WITH CALMODULIN</scope>
</reference>
<reference key="13">
    <citation type="journal article" date="2003" name="Proc. Natl. Acad. Sci. U.S.A.">
        <title>Protein kinase C phosphorylation sensitizes but does not activate the capsaicin receptor transient receptor potential vanilloid 1 (TRPV1).</title>
        <authorList>
            <person name="Bhave G."/>
            <person name="Hu H.J."/>
            <person name="Glauner K.S."/>
            <person name="Zhu W."/>
            <person name="Wang H."/>
            <person name="Brasier D.J."/>
            <person name="Oxford G.S."/>
            <person name="Gereau R.W. IV"/>
        </authorList>
    </citation>
    <scope>FUNCTION</scope>
    <scope>MUTAGENESIS OF SER-502; THR-704 AND SER-800</scope>
    <scope>TRANSPORTER ACTIVITY</scope>
</reference>
<reference key="14">
    <citation type="journal article" date="2003" name="Science">
        <title>A modular PIP2 binding site as a determinant of capsaicin receptor sensitivity.</title>
        <authorList>
            <person name="Prescott E.D."/>
            <person name="Julius D."/>
        </authorList>
    </citation>
    <scope>FUNCTION</scope>
    <scope>MUTAGENESIS OF ARG-785; LYS-788; ARG-797 AND SER-800</scope>
    <scope>REGION</scope>
</reference>
<reference key="15">
    <citation type="journal article" date="2004" name="Am. J. Physiol.">
        <title>Modulation of TRPV1 by nonreceptor tyrosine kinase, c-Src kinase.</title>
        <authorList>
            <person name="Jin X."/>
            <person name="Morsy N."/>
            <person name="Winston J."/>
            <person name="Pasricha P.J."/>
            <person name="Garrett K."/>
            <person name="Akbarali H.I."/>
        </authorList>
    </citation>
    <scope>INTERACTION WITH CSK</scope>
</reference>
<reference key="16">
    <citation type="journal article" date="2002" name="J. Biol. Chem.">
        <title>Agonist recognition sites in the cytosolic tails of vanilloid receptor 1.</title>
        <authorList>
            <person name="Jung J."/>
            <person name="Lee S.Y."/>
            <person name="Hwang S.W."/>
            <person name="Cho H."/>
            <person name="Shin J."/>
            <person name="Kang Y.S."/>
            <person name="Kim S."/>
            <person name="Oh U."/>
        </authorList>
    </citation>
    <scope>MUTAGENESIS OF ARG-114; ARG-115 AND GLU-761</scope>
</reference>
<reference key="17">
    <citation type="journal article" date="2004" name="J. Biol. Chem.">
        <title>Phosphorylation of vanilloid receptor 1 by Ca2+/calmodulin-dependent kinase II regulates its vanilloid binding.</title>
        <authorList>
            <person name="Jung J."/>
            <person name="Shin J.S."/>
            <person name="Lee S.-Y."/>
            <person name="Hwang S.W."/>
            <person name="Koo J."/>
            <person name="Cho H."/>
            <person name="Oh U."/>
        </authorList>
    </citation>
    <scope>FUNCTION</scope>
    <scope>PHOSPHORYLATION AT SER-502 AND THR-704</scope>
    <scope>MUTAGENESIS OF SER-502 AND THR-704</scope>
</reference>
<reference key="18">
    <citation type="journal article" date="2004" name="J. Biol. Chem.">
        <title>Molecular determinants of vanilloid sensitivity in TRPV1.</title>
        <authorList>
            <person name="Gavva N.R."/>
            <person name="Klionsky L."/>
            <person name="Qu Y."/>
            <person name="Shi L."/>
            <person name="Tamir R."/>
            <person name="Edenson S."/>
            <person name="Zhang T.J."/>
            <person name="Viswanadhan V.N."/>
            <person name="Toth A."/>
            <person name="Pearce L.V."/>
            <person name="Vanderah T.W."/>
            <person name="Porreca F."/>
            <person name="Blumberg P.M."/>
            <person name="Lile J."/>
            <person name="Sun Y."/>
            <person name="Wild K."/>
            <person name="Louis J.C."/>
            <person name="Treanor J.J."/>
        </authorList>
    </citation>
    <scope>MUTAGENESIS OF TYR-511; MET-547 AND THR-550</scope>
</reference>
<reference key="19">
    <citation type="journal article" date="2004" name="J. Biol. Chem.">
        <title>TRPV1 acts as proton channel to induce acidification in nociceptive neurons.</title>
        <authorList>
            <person name="Hellwig N."/>
            <person name="Plant T.D."/>
            <person name="Janson W."/>
            <person name="Schafer M."/>
            <person name="Schultz G."/>
            <person name="Schaefer M."/>
        </authorList>
    </citation>
    <scope>FUNCTION</scope>
</reference>
<reference key="20">
    <citation type="journal article" date="2004" name="J. Biol. Chem.">
        <title>Interaction between protein kinase Cmu and the vanilloid receptor type 1.</title>
        <authorList>
            <person name="Wang Y."/>
            <person name="Kedei N."/>
            <person name="Wang M."/>
            <person name="Wang Q.J."/>
            <person name="Huppler A.R."/>
            <person name="Toth A."/>
            <person name="Tran R."/>
            <person name="Blumberg P.M."/>
        </authorList>
    </citation>
    <scope>INTERACTION WITH PRKCM</scope>
    <scope>PHOSPHORYLATION AT SER-116</scope>
    <scope>MUTAGENESIS OF SER-116</scope>
</reference>
<reference key="21">
    <citation type="journal article" date="2004" name="J. Neurosci.">
        <title>Identification of a tetramerization domain in the C-terminus of the vanilloid receptor.</title>
        <authorList>
            <person name="Garcia-Sanz N."/>
            <person name="Fernandez-Carvajal A."/>
            <person name="Morenilla-Palao C."/>
            <person name="Planells-Cases R."/>
            <person name="Fajardo-Sanchez E."/>
            <person name="Fernandez-Ballester G."/>
            <person name="Ferrer-Montiel A."/>
        </authorList>
    </citation>
    <scope>SUBUNIT</scope>
    <scope>DOMAIN</scope>
</reference>
<reference key="22">
    <citation type="journal article" date="2005" name="Brain Res. Mol. Brain Res.">
        <title>Expression and distribution of vanilloid receptor 1 (TRPV1) in the adult rat brain.</title>
        <authorList>
            <person name="Toth A."/>
            <person name="Boczan J."/>
            <person name="Kedei N."/>
            <person name="Lizanecz E."/>
            <person name="Bagi Z."/>
            <person name="Papp Z."/>
            <person name="Edes I."/>
            <person name="Csiba L."/>
            <person name="Blumberg P.M."/>
        </authorList>
    </citation>
    <scope>TISSUE SPECIFICITY</scope>
    <scope>SUBCELLULAR LOCATION</scope>
</reference>
<reference key="23">
    <citation type="journal article" date="2010" name="Cell">
        <title>A bivalent tarantula toxin activates the capsaicin receptor, TRPV1, by targeting the outer pore domain.</title>
        <authorList>
            <person name="Bohlen C.J."/>
            <person name="Priel A."/>
            <person name="Zhou S."/>
            <person name="King D."/>
            <person name="Siemens J."/>
            <person name="Julius D."/>
        </authorList>
    </citation>
    <scope>FUNCTION</scope>
    <scope>ACTIVITY REGULATION</scope>
</reference>
<reference key="24">
    <citation type="journal article" date="2010" name="Nat. Neurosci.">
        <title>TRPV1 activation by endogenous anandamide triggers postsynaptic long-term depression in dentate gyrus.</title>
        <authorList>
            <person name="Chavez A.E."/>
            <person name="Chiu C.Q."/>
            <person name="Castillo P.E."/>
        </authorList>
    </citation>
    <scope>FUNCTION</scope>
</reference>
<reference evidence="37 38" key="25">
    <citation type="journal article" date="2007" name="Neuron">
        <title>The ankyrin repeats of TRPV1 bind multiple ligands and modulate channel sensitivity.</title>
        <authorList>
            <person name="Lishko P.V."/>
            <person name="Procko E."/>
            <person name="Jin X."/>
            <person name="Phelps C.B."/>
            <person name="Gaudet R."/>
        </authorList>
    </citation>
    <scope>X-RAY CRYSTALLOGRAPHY (2.7 ANGSTROMS) OF 101-364 IN COMPLEX WITH ATP</scope>
    <scope>FUNCTION</scope>
    <scope>ACTIVITY REGULATION</scope>
    <scope>SUBCELLULAR LOCATION</scope>
    <scope>ATP-BINDING</scope>
    <scope>CALMODULIN-BINDING</scope>
    <scope>MUTAGENESIS OF LYS-155; LYS-160; TYR-199 AND GLN-202</scope>
    <scope>ANKYRIN REPEATS</scope>
</reference>
<reference evidence="42" key="26">
    <citation type="journal article" date="2012" name="J. Gen. Physiol.">
        <title>Distinct properties of Ca2+-calmodulin binding to N- and C-terminal regulatory regions of the TRPV1 channel.</title>
        <authorList>
            <person name="Lau S.Y."/>
            <person name="Procko E."/>
            <person name="Gaudet R."/>
        </authorList>
    </citation>
    <scope>X-RAY CRYSTALLOGRAPHY (1.95 ANGSTROMS) OF 767-801 IN COMPLEX WITH CALM</scope>
    <scope>FUNCTION</scope>
    <scope>MUTAGENESIS OF LYS-155; ARG-785; TRP-787 AND LYS-788</scope>
    <scope>CALMODULIN-BINDING</scope>
    <scope>INTERACTION WITH CALM</scope>
    <scope>ACTIVITY REGULATION</scope>
</reference>
<reference evidence="39" key="27">
    <citation type="journal article" date="2013" name="Nature">
        <title>Structure of the TRPV1 ion channel determined by electron cryo-microscopy.</title>
        <authorList>
            <person name="Liao M."/>
            <person name="Cao E."/>
            <person name="Julius D."/>
            <person name="Cheng Y."/>
        </authorList>
    </citation>
    <scope>STRUCTURE BY ELECTRON MICROSCOPY (3.27 ANGSTROMS)</scope>
    <scope>FUNCTION</scope>
    <scope>SUBCELLULAR LOCATION</scope>
    <scope>TOPOLOGY</scope>
    <scope>ANK REPEATS</scope>
    <scope>SUBUNIT</scope>
</reference>
<reference evidence="40 41" key="28">
    <citation type="journal article" date="2013" name="Nature">
        <title>TRPV1 structures in distinct conformations reveal activation mechanisms.</title>
        <authorList>
            <person name="Cao E."/>
            <person name="Liao M."/>
            <person name="Cheng Y."/>
            <person name="Julius D."/>
        </authorList>
    </citation>
    <scope>STRUCTURE BY ELECTRON MICROSCOPY (3.8 ANGSTROMS) IN COMPLEXES WITH CAPSAICIN AND TARANTULA DOUBLE-KNOT TOXIN</scope>
    <scope>SUBUNIT</scope>
</reference>
<reference evidence="43 44 45" key="29">
    <citation type="journal article" date="2016" name="Nature">
        <title>TRPV1 structures in nanodiscs reveal mechanisms of ligand and lipid action.</title>
        <authorList>
            <person name="Gao Y."/>
            <person name="Cao E."/>
            <person name="Julius D."/>
            <person name="Cheng Y."/>
        </authorList>
    </citation>
    <scope>STRUCTURE BY ELECTRON MICROSCOPY (2.95 ANGSTROMS) OF 110-764 OF APOPROTEIN AND IN COMPLEX WITH AGONIST</scope>
    <scope>SUBUNIT</scope>
    <scope>TOPOLOGY</scope>
    <scope>LIPID-BINDING</scope>
</reference>
<accession>O35433</accession>
<accession>Q920B3</accession>
<accession>Q920B4</accession>
<accession>Q9JLM0</accession>
<accession>Q9JM56</accession>
<accession>Q9JM57</accession>
<sequence>MEQRASLDSEESESPPQENSCLDPPDRDPNCKPPPVKPHIFTTRSRTRLFGKGDSEEASPLDCPYEEGGLASCPIITVSSVLTIQRPGDGPASVRPSSQDSVSAGEKPPRLYDRRSIFDAVAQSNCQELESLLPFLQRSKKRLTDSEFKDPETGKTCLLKAMLNLHNGQNDTIALLLDVARKTDSLKQFVNASYTDSYYKGQTALHIAIERRNMTLVTLLVENGADVQAAANGDFFKKTKGRPGFYFGELPLSLAACTNQLAIVKFLLQNSWQPADISARDSVGNTVLHALVEVADNTVDNTKFVTSMYNEILILGAKLHPTLKLEEITNRKGLTPLALAASSGKIGVLAYILQREIHEPECRHLSRKFTEWAYGPVHSSLYDLSCIDTCEKNSVLEVIAYSSSETPNRHDMLLVEPLNRLLQDKWDRFVKRIFYFNFFVYCLYMIIFTAAAYYRPVEGLPPYKLKNTVGDYFRVTGEILSVSGGVYFFFRGIQYFLQRRPSLKSLFVDSYSEILFFVQSLFMLVSVVLYFSQRKEYVASMVFSLAMGWTNMLYYTRGFQQMGIYAVMIEKMILRDLCRFMFVYLVFLFGFSTAVVTLIEDGKNNSLPMESTPHKCRGSACKPGNSYNSLYSTCLELFKFTIGMGDLEFTENYDFKAVFIILLLAYVILTYILLLNMLIALMGETVNKIAQESKNIWKLQRAITILDTEKSFLKCMRKAFRSGKLLQVGFTPDGKDDYRWCFRVDEVNWTTWNTNVGIINEDPGNCEGVKRTLSFSLRSGRVSGRNWKNFALVPLLRDASTRDRHATQQEEVQLKHYTGSLKPEDAEVFKDSMVPGEK</sequence>
<protein>
    <recommendedName>
        <fullName>Transient receptor potential cation channel subfamily V member 1</fullName>
        <shortName>TrpV1</shortName>
    </recommendedName>
    <alternativeName>
        <fullName>Capsaicin receptor</fullName>
    </alternativeName>
    <alternativeName>
        <fullName>Osm-9-like TRP channel 1</fullName>
        <shortName>OTRPC1</shortName>
    </alternativeName>
    <alternativeName>
        <fullName>Vanilloid receptor 1</fullName>
    </alternativeName>
    <alternativeName>
        <fullName>Vanilloid receptor type 1-like</fullName>
    </alternativeName>
</protein>
<proteinExistence type="evidence at protein level"/>
<keyword id="KW-0002">3D-structure</keyword>
<keyword id="KW-0025">Alternative splicing</keyword>
<keyword id="KW-0040">ANK repeat</keyword>
<keyword id="KW-0067">ATP-binding</keyword>
<keyword id="KW-0106">Calcium</keyword>
<keyword id="KW-0107">Calcium channel</keyword>
<keyword id="KW-0109">Calcium transport</keyword>
<keyword id="KW-0112">Calmodulin-binding</keyword>
<keyword id="KW-1003">Cell membrane</keyword>
<keyword id="KW-0966">Cell projection</keyword>
<keyword id="KW-0325">Glycoprotein</keyword>
<keyword id="KW-0407">Ion channel</keyword>
<keyword id="KW-0406">Ion transport</keyword>
<keyword id="KW-0446">Lipid-binding</keyword>
<keyword id="KW-0472">Membrane</keyword>
<keyword id="KW-0479">Metal-binding</keyword>
<keyword id="KW-0547">Nucleotide-binding</keyword>
<keyword id="KW-0597">Phosphoprotein</keyword>
<keyword id="KW-0628">Postsynaptic cell membrane</keyword>
<keyword id="KW-1185">Reference proteome</keyword>
<keyword id="KW-0677">Repeat</keyword>
<keyword id="KW-0915">Sodium</keyword>
<keyword id="KW-0770">Synapse</keyword>
<keyword id="KW-0812">Transmembrane</keyword>
<keyword id="KW-1133">Transmembrane helix</keyword>
<keyword id="KW-0813">Transport</keyword>
<dbReference type="EMBL" id="AF029310">
    <property type="protein sequence ID" value="AAC53398.1"/>
    <property type="molecule type" value="mRNA"/>
</dbReference>
<dbReference type="EMBL" id="AF158248">
    <property type="protein sequence ID" value="AAF28389.1"/>
    <property type="molecule type" value="mRNA"/>
</dbReference>
<dbReference type="EMBL" id="AB041029">
    <property type="protein sequence ID" value="BAA94306.1"/>
    <property type="molecule type" value="mRNA"/>
</dbReference>
<dbReference type="EMBL" id="AB040873">
    <property type="protein sequence ID" value="BAA94307.1"/>
    <property type="molecule type" value="mRNA"/>
</dbReference>
<dbReference type="EMBL" id="AF327067">
    <property type="protein sequence ID" value="AAK83151.1"/>
    <property type="molecule type" value="Genomic_DNA"/>
</dbReference>
<dbReference type="EMBL" id="AF327067">
    <property type="protein sequence ID" value="AAK83152.1"/>
    <property type="molecule type" value="Genomic_DNA"/>
</dbReference>
<dbReference type="PIR" id="T09054">
    <property type="entry name" value="T09054"/>
</dbReference>
<dbReference type="RefSeq" id="NP_114188.1">
    <molecule id="O35433-1"/>
    <property type="nucleotide sequence ID" value="NM_031982.1"/>
</dbReference>
<dbReference type="PDB" id="2NYJ">
    <property type="method" value="X-ray"/>
    <property type="resolution" value="3.20 A"/>
    <property type="chains" value="A=101-364"/>
</dbReference>
<dbReference type="PDB" id="2PNN">
    <property type="method" value="X-ray"/>
    <property type="resolution" value="2.70 A"/>
    <property type="chains" value="A=101-364"/>
</dbReference>
<dbReference type="PDB" id="3J5P">
    <property type="method" value="EM"/>
    <property type="resolution" value="3.28 A"/>
    <property type="chains" value="A/B/C/D=111-719"/>
</dbReference>
<dbReference type="PDB" id="3J5Q">
    <property type="method" value="EM"/>
    <property type="resolution" value="3.80 A"/>
    <property type="chains" value="B/D/E/G=111-719"/>
</dbReference>
<dbReference type="PDB" id="3J5R">
    <property type="method" value="EM"/>
    <property type="resolution" value="4.20 A"/>
    <property type="chains" value="A/B/C/D=111-719"/>
</dbReference>
<dbReference type="PDB" id="3J9J">
    <property type="method" value="EM"/>
    <property type="chains" value="A/B/C/D=111-719"/>
</dbReference>
<dbReference type="PDB" id="3SUI">
    <property type="method" value="X-ray"/>
    <property type="resolution" value="1.95 A"/>
    <property type="chains" value="B=767-801"/>
</dbReference>
<dbReference type="PDB" id="5IRX">
    <property type="method" value="EM"/>
    <property type="resolution" value="2.95 A"/>
    <property type="chains" value="A/B/C/D=110-764"/>
</dbReference>
<dbReference type="PDB" id="5IRZ">
    <property type="method" value="EM"/>
    <property type="resolution" value="3.28 A"/>
    <property type="chains" value="B/C/D/E=110-764"/>
</dbReference>
<dbReference type="PDB" id="5IS0">
    <property type="method" value="EM"/>
    <property type="resolution" value="3.43 A"/>
    <property type="chains" value="B/C/D/E=110-764"/>
</dbReference>
<dbReference type="PDB" id="7L2H">
    <property type="method" value="EM"/>
    <property type="resolution" value="2.63 A"/>
    <property type="chains" value="A/B/C/D=2-838"/>
</dbReference>
<dbReference type="PDB" id="7L2I">
    <property type="method" value="EM"/>
    <property type="resolution" value="3.70 A"/>
    <property type="chains" value="A/B/C/D=2-838"/>
</dbReference>
<dbReference type="PDB" id="7L2J">
    <property type="method" value="EM"/>
    <property type="resolution" value="3.66 A"/>
    <property type="chains" value="A/B/C/D=2-838"/>
</dbReference>
<dbReference type="PDB" id="7L2K">
    <property type="method" value="EM"/>
    <property type="resolution" value="3.89 A"/>
    <property type="chains" value="A/B/C/D=2-838"/>
</dbReference>
<dbReference type="PDB" id="7L2L">
    <property type="method" value="EM"/>
    <property type="resolution" value="3.42 A"/>
    <property type="chains" value="A/B/C/D=2-838"/>
</dbReference>
<dbReference type="PDB" id="7L2M">
    <property type="method" value="EM"/>
    <property type="resolution" value="3.84 A"/>
    <property type="chains" value="A/B/C/D=2-838"/>
</dbReference>
<dbReference type="PDB" id="7L2N">
    <property type="method" value="EM"/>
    <property type="resolution" value="3.09 A"/>
    <property type="chains" value="A/B/C/D=2-838"/>
</dbReference>
<dbReference type="PDB" id="7L2O">
    <property type="method" value="EM"/>
    <property type="resolution" value="3.64 A"/>
    <property type="chains" value="A/B/C/D=2-838"/>
</dbReference>
<dbReference type="PDB" id="7L2P">
    <property type="method" value="EM"/>
    <property type="resolution" value="2.60 A"/>
    <property type="chains" value="A/B/C/D=110-764"/>
</dbReference>
<dbReference type="PDB" id="7L2R">
    <property type="method" value="EM"/>
    <property type="resolution" value="3.30 A"/>
    <property type="chains" value="A/B/C/D=110-764"/>
</dbReference>
<dbReference type="PDB" id="7L2S">
    <property type="method" value="EM"/>
    <property type="resolution" value="2.71 A"/>
    <property type="chains" value="A/B/C/D=110-764"/>
</dbReference>
<dbReference type="PDB" id="7L2T">
    <property type="method" value="EM"/>
    <property type="resolution" value="3.08 A"/>
    <property type="chains" value="A/B/C/D=110-764"/>
</dbReference>
<dbReference type="PDB" id="7L2U">
    <property type="method" value="EM"/>
    <property type="resolution" value="3.47 A"/>
    <property type="chains" value="A/B/C/D=110-764"/>
</dbReference>
<dbReference type="PDB" id="7L2V">
    <property type="method" value="EM"/>
    <property type="resolution" value="3.64 A"/>
    <property type="chains" value="A/B/C/D=110-764"/>
</dbReference>
<dbReference type="PDB" id="7L2W">
    <property type="method" value="EM"/>
    <property type="resolution" value="3.16 A"/>
    <property type="chains" value="A/B/C/D=110-764"/>
</dbReference>
<dbReference type="PDB" id="7L2X">
    <property type="method" value="EM"/>
    <property type="resolution" value="3.26 A"/>
    <property type="chains" value="A/B/C/D=110-764"/>
</dbReference>
<dbReference type="PDB" id="7LP9">
    <property type="method" value="EM"/>
    <property type="resolution" value="2.63 A"/>
    <property type="chains" value="A/B/C/D=1-838"/>
</dbReference>
<dbReference type="PDB" id="7LPA">
    <property type="method" value="EM"/>
    <property type="resolution" value="3.37 A"/>
    <property type="chains" value="A/B/C/D=1-838"/>
</dbReference>
<dbReference type="PDB" id="7LPB">
    <property type="method" value="EM"/>
    <property type="resolution" value="3.54 A"/>
    <property type="chains" value="A/B/C/D=1-838"/>
</dbReference>
<dbReference type="PDB" id="7LPC">
    <property type="method" value="EM"/>
    <property type="resolution" value="3.06 A"/>
    <property type="chains" value="A/B/C/D=1-838"/>
</dbReference>
<dbReference type="PDB" id="7LPD">
    <property type="method" value="EM"/>
    <property type="resolution" value="3.55 A"/>
    <property type="chains" value="A/B/C/D=1-838"/>
</dbReference>
<dbReference type="PDB" id="7LPE">
    <property type="method" value="EM"/>
    <property type="resolution" value="3.72 A"/>
    <property type="chains" value="A/B/C/D=1-838"/>
</dbReference>
<dbReference type="PDB" id="7MZ5">
    <property type="method" value="EM"/>
    <property type="resolution" value="2.76 A"/>
    <property type="chains" value="A/B/C/D=2-838"/>
</dbReference>
<dbReference type="PDB" id="7MZ6">
    <property type="method" value="EM"/>
    <property type="resolution" value="2.91 A"/>
    <property type="chains" value="A/B/C/D=110-764"/>
</dbReference>
<dbReference type="PDB" id="7MZ7">
    <property type="method" value="EM"/>
    <property type="resolution" value="3.35 A"/>
    <property type="chains" value="A/B/C/D=110-764"/>
</dbReference>
<dbReference type="PDB" id="7MZ9">
    <property type="method" value="EM"/>
    <property type="resolution" value="3.18 A"/>
    <property type="chains" value="A/B/C/D=110-764"/>
</dbReference>
<dbReference type="PDB" id="7MZA">
    <property type="method" value="EM"/>
    <property type="resolution" value="3.46 A"/>
    <property type="chains" value="A/B/C/D=110-764"/>
</dbReference>
<dbReference type="PDB" id="7MZB">
    <property type="method" value="EM"/>
    <property type="resolution" value="3.72 A"/>
    <property type="chains" value="A/B/C/D=110-764"/>
</dbReference>
<dbReference type="PDB" id="7MZC">
    <property type="method" value="EM"/>
    <property type="resolution" value="3.03 A"/>
    <property type="chains" value="A/B/C/D=110-764"/>
</dbReference>
<dbReference type="PDB" id="7MZD">
    <property type="method" value="EM"/>
    <property type="resolution" value="2.90 A"/>
    <property type="chains" value="A/B/C/D=110-764"/>
</dbReference>
<dbReference type="PDB" id="7MZE">
    <property type="method" value="EM"/>
    <property type="resolution" value="3.42 A"/>
    <property type="chains" value="A/B/C/D=110-764"/>
</dbReference>
<dbReference type="PDB" id="7RQU">
    <property type="method" value="EM"/>
    <property type="resolution" value="3.05 A"/>
    <property type="chains" value="A/B/C/D=1-838"/>
</dbReference>
<dbReference type="PDB" id="7RQV">
    <property type="method" value="EM"/>
    <property type="resolution" value="3.45 A"/>
    <property type="chains" value="A/B/C/D=1-838"/>
</dbReference>
<dbReference type="PDB" id="7RQW">
    <property type="method" value="EM"/>
    <property type="resolution" value="3.11 A"/>
    <property type="chains" value="A/B/C/D=1-838"/>
</dbReference>
<dbReference type="PDB" id="7RQX">
    <property type="method" value="EM"/>
    <property type="resolution" value="3.36 A"/>
    <property type="chains" value="A/B/C/D=1-838"/>
</dbReference>
<dbReference type="PDB" id="7RQY">
    <property type="method" value="EM"/>
    <property type="resolution" value="3.04 A"/>
    <property type="chains" value="A/B/C/D=1-838"/>
</dbReference>
<dbReference type="PDB" id="7RQZ">
    <property type="method" value="EM"/>
    <property type="resolution" value="3.32 A"/>
    <property type="chains" value="A/B/C/D=1-838"/>
</dbReference>
<dbReference type="PDB" id="8T0C">
    <property type="method" value="EM"/>
    <property type="resolution" value="3.50 A"/>
    <property type="chains" value="A/B/C/D=1-838"/>
</dbReference>
<dbReference type="PDB" id="8T0E">
    <property type="method" value="EM"/>
    <property type="resolution" value="3.30 A"/>
    <property type="chains" value="A/B/C/D=1-838"/>
</dbReference>
<dbReference type="PDB" id="8T0Y">
    <property type="method" value="EM"/>
    <property type="resolution" value="3.50 A"/>
    <property type="chains" value="A/B/C/D=1-838"/>
</dbReference>
<dbReference type="PDB" id="8T10">
    <property type="method" value="EM"/>
    <property type="resolution" value="3.70 A"/>
    <property type="chains" value="A/B/C/D=1-838"/>
</dbReference>
<dbReference type="PDB" id="8T3L">
    <property type="method" value="EM"/>
    <property type="resolution" value="3.60 A"/>
    <property type="chains" value="A/B/C/D=110-764"/>
</dbReference>
<dbReference type="PDB" id="8T3M">
    <property type="method" value="EM"/>
    <property type="resolution" value="3.50 A"/>
    <property type="chains" value="A/B/C/D=110-764"/>
</dbReference>
<dbReference type="PDB" id="8U2Z">
    <property type="method" value="EM"/>
    <property type="resolution" value="3.60 A"/>
    <property type="chains" value="A/B/C/D=110-764"/>
</dbReference>
<dbReference type="PDB" id="8U30">
    <property type="method" value="EM"/>
    <property type="resolution" value="3.00 A"/>
    <property type="chains" value="A/B/C/D=1-838"/>
</dbReference>
<dbReference type="PDB" id="8U3A">
    <property type="method" value="EM"/>
    <property type="resolution" value="2.30 A"/>
    <property type="chains" value="A/D=110-764"/>
</dbReference>
<dbReference type="PDB" id="8U3C">
    <property type="method" value="EM"/>
    <property type="resolution" value="2.30 A"/>
    <property type="chains" value="A/D=1-838"/>
</dbReference>
<dbReference type="PDB" id="8U3J">
    <property type="method" value="EM"/>
    <property type="resolution" value="2.90 A"/>
    <property type="chains" value="A/B/C/D=197-753"/>
</dbReference>
<dbReference type="PDB" id="8U3L">
    <property type="method" value="EM"/>
    <property type="resolution" value="3.70 A"/>
    <property type="chains" value="A/B/C/D=1-838"/>
</dbReference>
<dbReference type="PDB" id="8U43">
    <property type="method" value="EM"/>
    <property type="resolution" value="2.40 A"/>
    <property type="chains" value="A/B/C/D=110-764"/>
</dbReference>
<dbReference type="PDB" id="8U4D">
    <property type="method" value="EM"/>
    <property type="resolution" value="2.20 A"/>
    <property type="chains" value="A/B/C/D=110-764"/>
</dbReference>
<dbReference type="PDBsum" id="2NYJ"/>
<dbReference type="PDBsum" id="2PNN"/>
<dbReference type="PDBsum" id="3J5P"/>
<dbReference type="PDBsum" id="3J5Q"/>
<dbReference type="PDBsum" id="3J5R"/>
<dbReference type="PDBsum" id="3J9J"/>
<dbReference type="PDBsum" id="3SUI"/>
<dbReference type="PDBsum" id="5IRX"/>
<dbReference type="PDBsum" id="5IRZ"/>
<dbReference type="PDBsum" id="5IS0"/>
<dbReference type="PDBsum" id="7L2H"/>
<dbReference type="PDBsum" id="7L2I"/>
<dbReference type="PDBsum" id="7L2J"/>
<dbReference type="PDBsum" id="7L2K"/>
<dbReference type="PDBsum" id="7L2L"/>
<dbReference type="PDBsum" id="7L2M"/>
<dbReference type="PDBsum" id="7L2N"/>
<dbReference type="PDBsum" id="7L2O"/>
<dbReference type="PDBsum" id="7L2P"/>
<dbReference type="PDBsum" id="7L2R"/>
<dbReference type="PDBsum" id="7L2S"/>
<dbReference type="PDBsum" id="7L2T"/>
<dbReference type="PDBsum" id="7L2U"/>
<dbReference type="PDBsum" id="7L2V"/>
<dbReference type="PDBsum" id="7L2W"/>
<dbReference type="PDBsum" id="7L2X"/>
<dbReference type="PDBsum" id="7LP9"/>
<dbReference type="PDBsum" id="7LPA"/>
<dbReference type="PDBsum" id="7LPB"/>
<dbReference type="PDBsum" id="7LPC"/>
<dbReference type="PDBsum" id="7LPD"/>
<dbReference type="PDBsum" id="7LPE"/>
<dbReference type="PDBsum" id="7MZ5"/>
<dbReference type="PDBsum" id="7MZ6"/>
<dbReference type="PDBsum" id="7MZ7"/>
<dbReference type="PDBsum" id="7MZ9"/>
<dbReference type="PDBsum" id="7MZA"/>
<dbReference type="PDBsum" id="7MZB"/>
<dbReference type="PDBsum" id="7MZC"/>
<dbReference type="PDBsum" id="7MZD"/>
<dbReference type="PDBsum" id="7MZE"/>
<dbReference type="PDBsum" id="7RQU"/>
<dbReference type="PDBsum" id="7RQV"/>
<dbReference type="PDBsum" id="7RQW"/>
<dbReference type="PDBsum" id="7RQX"/>
<dbReference type="PDBsum" id="7RQY"/>
<dbReference type="PDBsum" id="7RQZ"/>
<dbReference type="PDBsum" id="8T0C"/>
<dbReference type="PDBsum" id="8T0E"/>
<dbReference type="PDBsum" id="8T0Y"/>
<dbReference type="PDBsum" id="8T10"/>
<dbReference type="PDBsum" id="8T3L"/>
<dbReference type="PDBsum" id="8T3M"/>
<dbReference type="PDBsum" id="8U2Z"/>
<dbReference type="PDBsum" id="8U30"/>
<dbReference type="PDBsum" id="8U3A"/>
<dbReference type="PDBsum" id="8U3C"/>
<dbReference type="PDBsum" id="8U3J"/>
<dbReference type="PDBsum" id="8U3L"/>
<dbReference type="PDBsum" id="8U43"/>
<dbReference type="PDBsum" id="8U4D"/>
<dbReference type="EMDB" id="EMD-23128"/>
<dbReference type="EMDB" id="EMD-23129"/>
<dbReference type="EMDB" id="EMD-23130"/>
<dbReference type="EMDB" id="EMD-23131"/>
<dbReference type="EMDB" id="EMD-23132"/>
<dbReference type="EMDB" id="EMD-23133"/>
<dbReference type="EMDB" id="EMD-23134"/>
<dbReference type="EMDB" id="EMD-23135"/>
<dbReference type="EMDB" id="EMD-23136"/>
<dbReference type="EMDB" id="EMD-23138"/>
<dbReference type="EMDB" id="EMD-23139"/>
<dbReference type="EMDB" id="EMD-23140"/>
<dbReference type="EMDB" id="EMD-23141"/>
<dbReference type="EMDB" id="EMD-23142"/>
<dbReference type="EMDB" id="EMD-23143"/>
<dbReference type="EMDB" id="EMD-23144"/>
<dbReference type="EMDB" id="EMD-23161"/>
<dbReference type="EMDB" id="EMD-23473"/>
<dbReference type="EMDB" id="EMD-23474"/>
<dbReference type="EMDB" id="EMD-23475"/>
<dbReference type="EMDB" id="EMD-23476"/>
<dbReference type="EMDB" id="EMD-23478"/>
<dbReference type="EMDB" id="EMD-23479"/>
<dbReference type="EMDB" id="EMD-24083"/>
<dbReference type="EMDB" id="EMD-24084"/>
<dbReference type="EMDB" id="EMD-24085"/>
<dbReference type="EMDB" id="EMD-24086"/>
<dbReference type="EMDB" id="EMD-24087"/>
<dbReference type="EMDB" id="EMD-24088"/>
<dbReference type="EMDB" id="EMD-24089"/>
<dbReference type="EMDB" id="EMD-24090"/>
<dbReference type="EMDB" id="EMD-24091"/>
<dbReference type="EMDB" id="EMD-24636"/>
<dbReference type="EMDB" id="EMD-24637"/>
<dbReference type="EMDB" id="EMD-24638"/>
<dbReference type="EMDB" id="EMD-24639"/>
<dbReference type="EMDB" id="EMD-24640"/>
<dbReference type="EMDB" id="EMD-24641"/>
<dbReference type="EMDB" id="EMD-40940"/>
<dbReference type="EMDB" id="EMD-40941"/>
<dbReference type="EMDB" id="EMD-40949"/>
<dbReference type="EMDB" id="EMD-40951"/>
<dbReference type="EMDB" id="EMD-41005"/>
<dbReference type="EMDB" id="EMD-41006"/>
<dbReference type="EMDB" id="EMD-41847"/>
<dbReference type="EMDB" id="EMD-41848"/>
<dbReference type="EMDB" id="EMD-41855"/>
<dbReference type="EMDB" id="EMD-41857"/>
<dbReference type="EMDB" id="EMD-41864"/>
<dbReference type="EMDB" id="EMD-41866"/>
<dbReference type="EMDB" id="EMD-41873"/>
<dbReference type="EMDB" id="EMD-41879"/>
<dbReference type="EMDB" id="EMD-5776"/>
<dbReference type="EMDB" id="EMD-5777"/>
<dbReference type="EMDB" id="EMD-5778"/>
<dbReference type="EMDB" id="EMD-8117"/>
<dbReference type="EMDB" id="EMD-8118"/>
<dbReference type="EMDB" id="EMD-8119"/>
<dbReference type="EMDB" id="EMD-8120"/>
<dbReference type="SMR" id="O35433"/>
<dbReference type="BioGRID" id="249845">
    <property type="interactions" value="5"/>
</dbReference>
<dbReference type="CORUM" id="O35433"/>
<dbReference type="DIP" id="DIP-56949N"/>
<dbReference type="FunCoup" id="O35433">
    <property type="interactions" value="72"/>
</dbReference>
<dbReference type="IntAct" id="O35433">
    <property type="interactions" value="3"/>
</dbReference>
<dbReference type="MINT" id="O35433"/>
<dbReference type="STRING" id="10116.ENSRNOP00000026493"/>
<dbReference type="BindingDB" id="O35433"/>
<dbReference type="ChEMBL" id="CHEMBL5102"/>
<dbReference type="DrugCentral" id="O35433"/>
<dbReference type="GuidetoPHARMACOLOGY" id="507"/>
<dbReference type="TCDB" id="1.A.4.2.1">
    <property type="family name" value="the transient receptor potential ca2+/cation channel (trp-cc) family"/>
</dbReference>
<dbReference type="GlyCosmos" id="O35433">
    <property type="glycosylation" value="1 site, No reported glycans"/>
</dbReference>
<dbReference type="GlyGen" id="O35433">
    <property type="glycosylation" value="2 sites"/>
</dbReference>
<dbReference type="iPTMnet" id="O35433"/>
<dbReference type="PhosphoSitePlus" id="O35433"/>
<dbReference type="PaxDb" id="10116-ENSRNOP00000026493"/>
<dbReference type="ABCD" id="O35433">
    <property type="antibodies" value="2 sequenced antibodies"/>
</dbReference>
<dbReference type="Ensembl" id="ENSRNOT00000026493.7">
    <molecule id="O35433-1"/>
    <property type="protein sequence ID" value="ENSRNOP00000026493.3"/>
    <property type="gene ID" value="ENSRNOG00000019486.9"/>
</dbReference>
<dbReference type="Ensembl" id="ENSRNOT00000093394.2">
    <molecule id="O35433-2"/>
    <property type="protein sequence ID" value="ENSRNOP00000086172.1"/>
    <property type="gene ID" value="ENSRNOG00000019486.9"/>
</dbReference>
<dbReference type="GeneID" id="83810"/>
<dbReference type="KEGG" id="rno:83810"/>
<dbReference type="AGR" id="RGD:628841"/>
<dbReference type="CTD" id="7442"/>
<dbReference type="RGD" id="628841">
    <property type="gene designation" value="Trpv1"/>
</dbReference>
<dbReference type="eggNOG" id="KOG3676">
    <property type="taxonomic scope" value="Eukaryota"/>
</dbReference>
<dbReference type="GeneTree" id="ENSGT00940000160870"/>
<dbReference type="HOGENOM" id="CLU_012795_1_0_1"/>
<dbReference type="InParanoid" id="O35433"/>
<dbReference type="OMA" id="KDNENIW"/>
<dbReference type="OrthoDB" id="19708at9989"/>
<dbReference type="PhylomeDB" id="O35433"/>
<dbReference type="TreeFam" id="TF314711"/>
<dbReference type="Reactome" id="R-RNO-3295583">
    <property type="pathway name" value="TRP channels"/>
</dbReference>
<dbReference type="EvolutionaryTrace" id="O35433"/>
<dbReference type="PRO" id="PR:O35433"/>
<dbReference type="Proteomes" id="UP000002494">
    <property type="component" value="Chromosome 10"/>
</dbReference>
<dbReference type="Bgee" id="ENSRNOG00000019486">
    <property type="expression patterns" value="Expressed in adult mammalian kidney and 16 other cell types or tissues"/>
</dbReference>
<dbReference type="GO" id="GO:0030425">
    <property type="term" value="C:dendrite"/>
    <property type="evidence" value="ECO:0000314"/>
    <property type="project" value="RGD"/>
</dbReference>
<dbReference type="GO" id="GO:0032591">
    <property type="term" value="C:dendritic spine membrane"/>
    <property type="evidence" value="ECO:0007669"/>
    <property type="project" value="UniProtKB-SubCell"/>
</dbReference>
<dbReference type="GO" id="GO:0009897">
    <property type="term" value="C:external side of plasma membrane"/>
    <property type="evidence" value="ECO:0000314"/>
    <property type="project" value="UniProtKB"/>
</dbReference>
<dbReference type="GO" id="GO:0098982">
    <property type="term" value="C:GABA-ergic synapse"/>
    <property type="evidence" value="ECO:0000266"/>
    <property type="project" value="RGD"/>
</dbReference>
<dbReference type="GO" id="GO:0016020">
    <property type="term" value="C:membrane"/>
    <property type="evidence" value="ECO:0000314"/>
    <property type="project" value="UniProtKB"/>
</dbReference>
<dbReference type="GO" id="GO:0043005">
    <property type="term" value="C:neuron projection"/>
    <property type="evidence" value="ECO:0000266"/>
    <property type="project" value="RGD"/>
</dbReference>
<dbReference type="GO" id="GO:0043025">
    <property type="term" value="C:neuronal cell body"/>
    <property type="evidence" value="ECO:0000314"/>
    <property type="project" value="RGD"/>
</dbReference>
<dbReference type="GO" id="GO:0005886">
    <property type="term" value="C:plasma membrane"/>
    <property type="evidence" value="ECO:0000314"/>
    <property type="project" value="UniProtKB"/>
</dbReference>
<dbReference type="GO" id="GO:0045211">
    <property type="term" value="C:postsynaptic membrane"/>
    <property type="evidence" value="ECO:0000314"/>
    <property type="project" value="UniProtKB"/>
</dbReference>
<dbReference type="GO" id="GO:0005524">
    <property type="term" value="F:ATP binding"/>
    <property type="evidence" value="ECO:0000314"/>
    <property type="project" value="UniProtKB"/>
</dbReference>
<dbReference type="GO" id="GO:0005262">
    <property type="term" value="F:calcium channel activity"/>
    <property type="evidence" value="ECO:0000314"/>
    <property type="project" value="UniProtKB"/>
</dbReference>
<dbReference type="GO" id="GO:0005516">
    <property type="term" value="F:calmodulin binding"/>
    <property type="evidence" value="ECO:0000314"/>
    <property type="project" value="UniProtKB"/>
</dbReference>
<dbReference type="GO" id="GO:0017081">
    <property type="term" value="F:chloride channel regulator activity"/>
    <property type="evidence" value="ECO:0000314"/>
    <property type="project" value="RGD"/>
</dbReference>
<dbReference type="GO" id="GO:0005231">
    <property type="term" value="F:excitatory extracellular ligand-gated monoatomic ion channel activity"/>
    <property type="evidence" value="ECO:0000314"/>
    <property type="project" value="UniProtKB"/>
</dbReference>
<dbReference type="GO" id="GO:0005230">
    <property type="term" value="F:extracellular ligand-gated monoatomic ion channel activity"/>
    <property type="evidence" value="ECO:0000314"/>
    <property type="project" value="UniProtKB"/>
</dbReference>
<dbReference type="GO" id="GO:0042802">
    <property type="term" value="F:identical protein binding"/>
    <property type="evidence" value="ECO:0000353"/>
    <property type="project" value="IntAct"/>
</dbReference>
<dbReference type="GO" id="GO:0015278">
    <property type="term" value="F:intracellularly gated calcium channel activity"/>
    <property type="evidence" value="ECO:0000315"/>
    <property type="project" value="UniProtKB"/>
</dbReference>
<dbReference type="GO" id="GO:0015276">
    <property type="term" value="F:ligand-gated monoatomic ion channel activity"/>
    <property type="evidence" value="ECO:0000314"/>
    <property type="project" value="UniProtKB"/>
</dbReference>
<dbReference type="GO" id="GO:0046872">
    <property type="term" value="F:metal ion binding"/>
    <property type="evidence" value="ECO:0007669"/>
    <property type="project" value="UniProtKB-KW"/>
</dbReference>
<dbReference type="GO" id="GO:0005261">
    <property type="term" value="F:monoatomic cation channel activity"/>
    <property type="evidence" value="ECO:0000314"/>
    <property type="project" value="RGD"/>
</dbReference>
<dbReference type="GO" id="GO:0008324">
    <property type="term" value="F:monoatomic cation transmembrane transporter activity"/>
    <property type="evidence" value="ECO:0000314"/>
    <property type="project" value="MGI"/>
</dbReference>
<dbReference type="GO" id="GO:0035091">
    <property type="term" value="F:phosphatidylinositol binding"/>
    <property type="evidence" value="ECO:0000314"/>
    <property type="project" value="UniProtKB"/>
</dbReference>
<dbReference type="GO" id="GO:0051219">
    <property type="term" value="F:phosphoprotein binding"/>
    <property type="evidence" value="ECO:0000266"/>
    <property type="project" value="RGD"/>
</dbReference>
<dbReference type="GO" id="GO:0097603">
    <property type="term" value="F:temperature-gated ion channel activity"/>
    <property type="evidence" value="ECO:0000266"/>
    <property type="project" value="RGD"/>
</dbReference>
<dbReference type="GO" id="GO:0004888">
    <property type="term" value="F:transmembrane signaling receptor activity"/>
    <property type="evidence" value="ECO:0000314"/>
    <property type="project" value="UniProtKB"/>
</dbReference>
<dbReference type="GO" id="GO:0048266">
    <property type="term" value="P:behavioral response to pain"/>
    <property type="evidence" value="ECO:0000266"/>
    <property type="project" value="RGD"/>
</dbReference>
<dbReference type="GO" id="GO:0098703">
    <property type="term" value="P:calcium ion import across plasma membrane"/>
    <property type="evidence" value="ECO:0000314"/>
    <property type="project" value="UniProtKB"/>
</dbReference>
<dbReference type="GO" id="GO:0070588">
    <property type="term" value="P:calcium ion transmembrane transport"/>
    <property type="evidence" value="ECO:0000314"/>
    <property type="project" value="UniProtKB"/>
</dbReference>
<dbReference type="GO" id="GO:0006816">
    <property type="term" value="P:calcium ion transport"/>
    <property type="evidence" value="ECO:0000314"/>
    <property type="project" value="UniProtKB"/>
</dbReference>
<dbReference type="GO" id="GO:0071468">
    <property type="term" value="P:cellular response to acidic pH"/>
    <property type="evidence" value="ECO:0000314"/>
    <property type="project" value="UniProtKB"/>
</dbReference>
<dbReference type="GO" id="GO:0071312">
    <property type="term" value="P:cellular response to alkaloid"/>
    <property type="evidence" value="ECO:0000315"/>
    <property type="project" value="UniProtKB"/>
</dbReference>
<dbReference type="GO" id="GO:0071318">
    <property type="term" value="P:cellular response to ATP"/>
    <property type="evidence" value="ECO:0000314"/>
    <property type="project" value="UniProtKB"/>
</dbReference>
<dbReference type="GO" id="GO:0071345">
    <property type="term" value="P:cellular response to cytokine stimulus"/>
    <property type="evidence" value="ECO:0000314"/>
    <property type="project" value="UniProtKB"/>
</dbReference>
<dbReference type="GO" id="GO:0071363">
    <property type="term" value="P:cellular response to growth factor stimulus"/>
    <property type="evidence" value="ECO:0000270"/>
    <property type="project" value="RGD"/>
</dbReference>
<dbReference type="GO" id="GO:0034605">
    <property type="term" value="P:cellular response to heat"/>
    <property type="evidence" value="ECO:0000314"/>
    <property type="project" value="UniProtKB"/>
</dbReference>
<dbReference type="GO" id="GO:1990090">
    <property type="term" value="P:cellular response to nerve growth factor stimulus"/>
    <property type="evidence" value="ECO:0000270"/>
    <property type="project" value="RGD"/>
</dbReference>
<dbReference type="GO" id="GO:0071502">
    <property type="term" value="P:cellular response to temperature stimulus"/>
    <property type="evidence" value="ECO:0000270"/>
    <property type="project" value="RGD"/>
</dbReference>
<dbReference type="GO" id="GO:0071356">
    <property type="term" value="P:cellular response to tumor necrosis factor"/>
    <property type="evidence" value="ECO:0000270"/>
    <property type="project" value="RGD"/>
</dbReference>
<dbReference type="GO" id="GO:0050968">
    <property type="term" value="P:detection of chemical stimulus involved in sensory perception of pain"/>
    <property type="evidence" value="ECO:0000266"/>
    <property type="project" value="RGD"/>
</dbReference>
<dbReference type="GO" id="GO:0050965">
    <property type="term" value="P:detection of temperature stimulus involved in sensory perception of pain"/>
    <property type="evidence" value="ECO:0000266"/>
    <property type="project" value="RGD"/>
</dbReference>
<dbReference type="GO" id="GO:0050960">
    <property type="term" value="P:detection of temperature stimulus involved in thermoception"/>
    <property type="evidence" value="ECO:0000266"/>
    <property type="project" value="RGD"/>
</dbReference>
<dbReference type="GO" id="GO:0002024">
    <property type="term" value="P:diet induced thermogenesis"/>
    <property type="evidence" value="ECO:0000266"/>
    <property type="project" value="RGD"/>
</dbReference>
<dbReference type="GO" id="GO:0001660">
    <property type="term" value="P:fever generation"/>
    <property type="evidence" value="ECO:0000266"/>
    <property type="project" value="RGD"/>
</dbReference>
<dbReference type="GO" id="GO:0014047">
    <property type="term" value="P:glutamate secretion"/>
    <property type="evidence" value="ECO:0000314"/>
    <property type="project" value="RGD"/>
</dbReference>
<dbReference type="GO" id="GO:0006629">
    <property type="term" value="P:lipid metabolic process"/>
    <property type="evidence" value="ECO:0000266"/>
    <property type="project" value="RGD"/>
</dbReference>
<dbReference type="GO" id="GO:0001774">
    <property type="term" value="P:microglial cell activation"/>
    <property type="evidence" value="ECO:0000315"/>
    <property type="project" value="RGD"/>
</dbReference>
<dbReference type="GO" id="GO:0034220">
    <property type="term" value="P:monoatomic ion transmembrane transport"/>
    <property type="evidence" value="ECO:0000266"/>
    <property type="project" value="RGD"/>
</dbReference>
<dbReference type="GO" id="GO:0090212">
    <property type="term" value="P:negative regulation of establishment of blood-brain barrier"/>
    <property type="evidence" value="ECO:0000315"/>
    <property type="project" value="RGD"/>
</dbReference>
<dbReference type="GO" id="GO:0010459">
    <property type="term" value="P:negative regulation of heart rate"/>
    <property type="evidence" value="ECO:0000315"/>
    <property type="project" value="RGD"/>
</dbReference>
<dbReference type="GO" id="GO:0010917">
    <property type="term" value="P:negative regulation of mitochondrial membrane potential"/>
    <property type="evidence" value="ECO:0000315"/>
    <property type="project" value="RGD"/>
</dbReference>
<dbReference type="GO" id="GO:0003085">
    <property type="term" value="P:negative regulation of systemic arterial blood pressure"/>
    <property type="evidence" value="ECO:0000315"/>
    <property type="project" value="RGD"/>
</dbReference>
<dbReference type="GO" id="GO:0000122">
    <property type="term" value="P:negative regulation of transcription by RNA polymerase II"/>
    <property type="evidence" value="ECO:0000266"/>
    <property type="project" value="RGD"/>
</dbReference>
<dbReference type="GO" id="GO:0002790">
    <property type="term" value="P:peptide secretion"/>
    <property type="evidence" value="ECO:0000266"/>
    <property type="project" value="RGD"/>
</dbReference>
<dbReference type="GO" id="GO:0043065">
    <property type="term" value="P:positive regulation of apoptotic process"/>
    <property type="evidence" value="ECO:0000315"/>
    <property type="project" value="RGD"/>
</dbReference>
<dbReference type="GO" id="GO:0007204">
    <property type="term" value="P:positive regulation of cytosolic calcium ion concentration"/>
    <property type="evidence" value="ECO:0000314"/>
    <property type="project" value="RGD"/>
</dbReference>
<dbReference type="GO" id="GO:0045429">
    <property type="term" value="P:positive regulation of nitric oxide biosynthetic process"/>
    <property type="evidence" value="ECO:0000315"/>
    <property type="project" value="RGD"/>
</dbReference>
<dbReference type="GO" id="GO:0051289">
    <property type="term" value="P:protein homotetramerization"/>
    <property type="evidence" value="ECO:0000314"/>
    <property type="project" value="UniProtKB"/>
</dbReference>
<dbReference type="GO" id="GO:1901594">
    <property type="term" value="P:response to capsazepine"/>
    <property type="evidence" value="ECO:0000315"/>
    <property type="project" value="UniProtKB"/>
</dbReference>
<dbReference type="GO" id="GO:0009408">
    <property type="term" value="P:response to heat"/>
    <property type="evidence" value="ECO:0000314"/>
    <property type="project" value="MGI"/>
</dbReference>
<dbReference type="GO" id="GO:0048265">
    <property type="term" value="P:response to pain"/>
    <property type="evidence" value="ECO:0000266"/>
    <property type="project" value="RGD"/>
</dbReference>
<dbReference type="GO" id="GO:0043434">
    <property type="term" value="P:response to peptide hormone"/>
    <property type="evidence" value="ECO:0000270"/>
    <property type="project" value="RGD"/>
</dbReference>
<dbReference type="GO" id="GO:0009268">
    <property type="term" value="P:response to pH"/>
    <property type="evidence" value="ECO:0000314"/>
    <property type="project" value="MGI"/>
</dbReference>
<dbReference type="GO" id="GO:0050954">
    <property type="term" value="P:sensory perception of mechanical stimulus"/>
    <property type="evidence" value="ECO:0000266"/>
    <property type="project" value="RGD"/>
</dbReference>
<dbReference type="GO" id="GO:0019233">
    <property type="term" value="P:sensory perception of pain"/>
    <property type="evidence" value="ECO:0000266"/>
    <property type="project" value="RGD"/>
</dbReference>
<dbReference type="GO" id="GO:0050909">
    <property type="term" value="P:sensory perception of taste"/>
    <property type="evidence" value="ECO:0000266"/>
    <property type="project" value="RGD"/>
</dbReference>
<dbReference type="GO" id="GO:0060083">
    <property type="term" value="P:smooth muscle contraction involved in micturition"/>
    <property type="evidence" value="ECO:0000266"/>
    <property type="project" value="RGD"/>
</dbReference>
<dbReference type="GO" id="GO:0001659">
    <property type="term" value="P:temperature homeostasis"/>
    <property type="evidence" value="ECO:0000266"/>
    <property type="project" value="RGD"/>
</dbReference>
<dbReference type="GO" id="GO:0050955">
    <property type="term" value="P:thermoception"/>
    <property type="evidence" value="ECO:0000266"/>
    <property type="project" value="RGD"/>
</dbReference>
<dbReference type="GO" id="GO:0014832">
    <property type="term" value="P:urinary bladder smooth muscle contraction"/>
    <property type="evidence" value="ECO:0000266"/>
    <property type="project" value="RGD"/>
</dbReference>
<dbReference type="CDD" id="cd22196">
    <property type="entry name" value="TRPV1"/>
    <property type="match status" value="1"/>
</dbReference>
<dbReference type="FunFam" id="1.10.287.70:FF:000074">
    <property type="entry name" value="Transient receptor potential cation channel subfamily V member 1"/>
    <property type="match status" value="1"/>
</dbReference>
<dbReference type="FunFam" id="1.25.40.20:FF:000018">
    <property type="entry name" value="Transient receptor potential cation channel subfamily V member 1"/>
    <property type="match status" value="1"/>
</dbReference>
<dbReference type="Gene3D" id="1.10.287.70">
    <property type="match status" value="1"/>
</dbReference>
<dbReference type="Gene3D" id="1.25.40.20">
    <property type="entry name" value="Ankyrin repeat-containing domain"/>
    <property type="match status" value="1"/>
</dbReference>
<dbReference type="InterPro" id="IPR002110">
    <property type="entry name" value="Ankyrin_rpt"/>
</dbReference>
<dbReference type="InterPro" id="IPR036770">
    <property type="entry name" value="Ankyrin_rpt-contain_sf"/>
</dbReference>
<dbReference type="InterPro" id="IPR005821">
    <property type="entry name" value="Ion_trans_dom"/>
</dbReference>
<dbReference type="InterPro" id="IPR024862">
    <property type="entry name" value="TRPV"/>
</dbReference>
<dbReference type="InterPro" id="IPR008347">
    <property type="entry name" value="TrpV1-4"/>
</dbReference>
<dbReference type="NCBIfam" id="TIGR00870">
    <property type="entry name" value="trp"/>
    <property type="match status" value="1"/>
</dbReference>
<dbReference type="PANTHER" id="PTHR10582:SF17">
    <property type="entry name" value="TRANSIENT RECEPTOR POTENTIAL CATION CHANNEL SUBFAMILY V MEMBER 1"/>
    <property type="match status" value="1"/>
</dbReference>
<dbReference type="PANTHER" id="PTHR10582">
    <property type="entry name" value="TRANSIENT RECEPTOR POTENTIAL ION CHANNEL PROTEIN"/>
    <property type="match status" value="1"/>
</dbReference>
<dbReference type="Pfam" id="PF00023">
    <property type="entry name" value="Ank"/>
    <property type="match status" value="1"/>
</dbReference>
<dbReference type="Pfam" id="PF12796">
    <property type="entry name" value="Ank_2"/>
    <property type="match status" value="1"/>
</dbReference>
<dbReference type="Pfam" id="PF00520">
    <property type="entry name" value="Ion_trans"/>
    <property type="match status" value="1"/>
</dbReference>
<dbReference type="PRINTS" id="PR01768">
    <property type="entry name" value="TRPVRECEPTOR"/>
</dbReference>
<dbReference type="SMART" id="SM00248">
    <property type="entry name" value="ANK"/>
    <property type="match status" value="4"/>
</dbReference>
<dbReference type="SUPFAM" id="SSF48403">
    <property type="entry name" value="Ankyrin repeat"/>
    <property type="match status" value="1"/>
</dbReference>
<dbReference type="PROSITE" id="PS50297">
    <property type="entry name" value="ANK_REP_REGION"/>
    <property type="match status" value="1"/>
</dbReference>
<dbReference type="PROSITE" id="PS50088">
    <property type="entry name" value="ANK_REPEAT"/>
    <property type="match status" value="1"/>
</dbReference>
<name>TRPV1_RAT</name>
<evidence type="ECO:0000250" key="1">
    <source>
        <dbReference type="UniProtKB" id="Q704Y3"/>
    </source>
</evidence>
<evidence type="ECO:0000250" key="2">
    <source>
        <dbReference type="UniProtKB" id="Q8NER1"/>
    </source>
</evidence>
<evidence type="ECO:0000250" key="3">
    <source>
        <dbReference type="UniProtKB" id="Q9R186"/>
    </source>
</evidence>
<evidence type="ECO:0000256" key="4">
    <source>
        <dbReference type="SAM" id="MobiDB-lite"/>
    </source>
</evidence>
<evidence type="ECO:0000269" key="5">
    <source>
    </source>
</evidence>
<evidence type="ECO:0000269" key="6">
    <source>
    </source>
</evidence>
<evidence type="ECO:0000269" key="7">
    <source>
    </source>
</evidence>
<evidence type="ECO:0000269" key="8">
    <source>
    </source>
</evidence>
<evidence type="ECO:0000269" key="9">
    <source>
    </source>
</evidence>
<evidence type="ECO:0000269" key="10">
    <source>
    </source>
</evidence>
<evidence type="ECO:0000269" key="11">
    <source>
    </source>
</evidence>
<evidence type="ECO:0000269" key="12">
    <source>
    </source>
</evidence>
<evidence type="ECO:0000269" key="13">
    <source>
    </source>
</evidence>
<evidence type="ECO:0000269" key="14">
    <source>
    </source>
</evidence>
<evidence type="ECO:0000269" key="15">
    <source>
    </source>
</evidence>
<evidence type="ECO:0000269" key="16">
    <source>
    </source>
</evidence>
<evidence type="ECO:0000269" key="17">
    <source>
    </source>
</evidence>
<evidence type="ECO:0000269" key="18">
    <source>
    </source>
</evidence>
<evidence type="ECO:0000269" key="19">
    <source>
    </source>
</evidence>
<evidence type="ECO:0000269" key="20">
    <source>
    </source>
</evidence>
<evidence type="ECO:0000269" key="21">
    <source>
    </source>
</evidence>
<evidence type="ECO:0000269" key="22">
    <source>
    </source>
</evidence>
<evidence type="ECO:0000269" key="23">
    <source>
    </source>
</evidence>
<evidence type="ECO:0000269" key="24">
    <source>
    </source>
</evidence>
<evidence type="ECO:0000269" key="25">
    <source>
    </source>
</evidence>
<evidence type="ECO:0000269" key="26">
    <source>
    </source>
</evidence>
<evidence type="ECO:0000269" key="27">
    <source>
    </source>
</evidence>
<evidence type="ECO:0000269" key="28">
    <source>
    </source>
</evidence>
<evidence type="ECO:0000269" key="29">
    <source>
    </source>
</evidence>
<evidence type="ECO:0000269" key="30">
    <source>
    </source>
</evidence>
<evidence type="ECO:0000269" key="31">
    <source>
    </source>
</evidence>
<evidence type="ECO:0000269" key="32">
    <source>
    </source>
</evidence>
<evidence type="ECO:0000303" key="33">
    <source>
    </source>
</evidence>
<evidence type="ECO:0000303" key="34">
    <source>
    </source>
</evidence>
<evidence type="ECO:0000305" key="35"/>
<evidence type="ECO:0000305" key="36">
    <source>
    </source>
</evidence>
<evidence type="ECO:0007744" key="37">
    <source>
        <dbReference type="PDB" id="2NYJ"/>
    </source>
</evidence>
<evidence type="ECO:0007744" key="38">
    <source>
        <dbReference type="PDB" id="2PNN"/>
    </source>
</evidence>
<evidence type="ECO:0007744" key="39">
    <source>
        <dbReference type="PDB" id="3J5P"/>
    </source>
</evidence>
<evidence type="ECO:0007744" key="40">
    <source>
        <dbReference type="PDB" id="3J5Q"/>
    </source>
</evidence>
<evidence type="ECO:0007744" key="41">
    <source>
        <dbReference type="PDB" id="3J5R"/>
    </source>
</evidence>
<evidence type="ECO:0007744" key="42">
    <source>
        <dbReference type="PDB" id="3SUI"/>
    </source>
</evidence>
<evidence type="ECO:0007744" key="43">
    <source>
        <dbReference type="PDB" id="5IRX"/>
    </source>
</evidence>
<evidence type="ECO:0007744" key="44">
    <source>
        <dbReference type="PDB" id="5IRZ"/>
    </source>
</evidence>
<evidence type="ECO:0007744" key="45">
    <source>
        <dbReference type="PDB" id="5IS0"/>
    </source>
</evidence>
<evidence type="ECO:0007829" key="46">
    <source>
        <dbReference type="PDB" id="2NYJ"/>
    </source>
</evidence>
<evidence type="ECO:0007829" key="47">
    <source>
        <dbReference type="PDB" id="3J9J"/>
    </source>
</evidence>
<evidence type="ECO:0007829" key="48">
    <source>
        <dbReference type="PDB" id="3SUI"/>
    </source>
</evidence>
<evidence type="ECO:0007829" key="49">
    <source>
        <dbReference type="PDB" id="5IRX"/>
    </source>
</evidence>
<evidence type="ECO:0007829" key="50">
    <source>
        <dbReference type="PDB" id="5IS0"/>
    </source>
</evidence>
<evidence type="ECO:0007829" key="51">
    <source>
        <dbReference type="PDB" id="7L2L"/>
    </source>
</evidence>
<evidence type="ECO:0007829" key="52">
    <source>
        <dbReference type="PDB" id="7L2P"/>
    </source>
</evidence>
<evidence type="ECO:0007829" key="53">
    <source>
        <dbReference type="PDB" id="7LP9"/>
    </source>
</evidence>
<evidence type="ECO:0007829" key="54">
    <source>
        <dbReference type="PDB" id="7RQU"/>
    </source>
</evidence>
<evidence type="ECO:0007829" key="55">
    <source>
        <dbReference type="PDB" id="7RQX"/>
    </source>
</evidence>
<evidence type="ECO:0007829" key="56">
    <source>
        <dbReference type="PDB" id="7RQY"/>
    </source>
</evidence>
<evidence type="ECO:0007829" key="57">
    <source>
        <dbReference type="PDB" id="7RQZ"/>
    </source>
</evidence>
<evidence type="ECO:0007829" key="58">
    <source>
        <dbReference type="PDB" id="8U43"/>
    </source>
</evidence>
<evidence type="ECO:0007829" key="59">
    <source>
        <dbReference type="PDB" id="8U4D"/>
    </source>
</evidence>
<feature type="chain" id="PRO_0000215341" description="Transient receptor potential cation channel subfamily V member 1">
    <location>
        <begin position="1"/>
        <end position="838"/>
    </location>
</feature>
<feature type="topological domain" description="Cytoplasmic" evidence="29 31 39 43 44 45">
    <location>
        <begin position="1"/>
        <end position="432"/>
    </location>
</feature>
<feature type="transmembrane region" description="Helical; Name=S1" evidence="29 31 39 43 44 45">
    <location>
        <begin position="433"/>
        <end position="453"/>
    </location>
</feature>
<feature type="topological domain" description="Extracellular" evidence="29 31 39 43 44 45">
    <location>
        <begin position="454"/>
        <end position="471"/>
    </location>
</feature>
<feature type="transmembrane region" description="Helical; Name=S2" evidence="29 31 39 43 44 45">
    <location>
        <begin position="472"/>
        <end position="497"/>
    </location>
</feature>
<feature type="topological domain" description="Cytoplasmic" evidence="29 31 39 43 44 45">
    <location>
        <begin position="498"/>
        <end position="510"/>
    </location>
</feature>
<feature type="transmembrane region" description="Helical; Name=S3" evidence="29 31 39 43 44 45">
    <location>
        <begin position="511"/>
        <end position="531"/>
    </location>
</feature>
<feature type="topological domain" description="Extracellular" evidence="29 31 39 43 44 45">
    <location>
        <begin position="532"/>
        <end position="535"/>
    </location>
</feature>
<feature type="transmembrane region" description="Helical; Name=S4" evidence="29 31 39 43 44 45">
    <location>
        <begin position="536"/>
        <end position="556"/>
    </location>
</feature>
<feature type="topological domain" description="Cytoplasmic" evidence="29 31 39 43 44 45">
    <location>
        <begin position="557"/>
        <end position="571"/>
    </location>
</feature>
<feature type="transmembrane region" description="Helical; Name=S5" evidence="29 31 39 43 44 45">
    <location>
        <begin position="572"/>
        <end position="599"/>
    </location>
</feature>
<feature type="topological domain" description="Extracellular" evidence="29 31 39 43 44 45">
    <location>
        <begin position="600"/>
        <end position="626"/>
    </location>
</feature>
<feature type="intramembrane region" description="Pore-forming" evidence="29 31 39 43 44 45">
    <location>
        <begin position="627"/>
        <end position="649"/>
    </location>
</feature>
<feature type="topological domain" description="Extracellular" evidence="29 31 39 43 44 45">
    <location>
        <begin position="650"/>
        <end position="657"/>
    </location>
</feature>
<feature type="transmembrane region" description="Helical; Name=S6" evidence="29 31 39 43 44 45">
    <location>
        <begin position="658"/>
        <end position="686"/>
    </location>
</feature>
<feature type="topological domain" description="Cytoplasmic" evidence="29 31 39 43 44 45">
    <location>
        <begin position="687"/>
        <end position="838"/>
    </location>
</feature>
<feature type="repeat" description="ANK 1" evidence="2">
    <location>
        <begin position="110"/>
        <end position="138"/>
    </location>
</feature>
<feature type="repeat" description="ANK 2" evidence="2">
    <location>
        <begin position="153"/>
        <end position="185"/>
    </location>
</feature>
<feature type="repeat" description="ANK 3" evidence="2">
    <location>
        <begin position="203"/>
        <end position="228"/>
    </location>
</feature>
<feature type="repeat" description="ANK 4" evidence="2">
    <location>
        <begin position="249"/>
        <end position="276"/>
    </location>
</feature>
<feature type="repeat" description="ANK 5" evidence="2">
    <location>
        <begin position="285"/>
        <end position="321"/>
    </location>
</feature>
<feature type="repeat" description="ANK 6" evidence="2">
    <location>
        <begin position="335"/>
        <end position="358"/>
    </location>
</feature>
<feature type="repeat" description="ANK 7" evidence="2">
    <location>
        <begin position="393"/>
        <end position="415"/>
    </location>
</feature>
<feature type="region of interest" description="Disordered" evidence="4">
    <location>
        <begin position="1"/>
        <end position="63"/>
    </location>
</feature>
<feature type="region of interest" description="Disordered" evidence="4">
    <location>
        <begin position="86"/>
        <end position="109"/>
    </location>
</feature>
<feature type="region of interest" description="AD" evidence="22">
    <location>
        <begin position="684"/>
        <end position="712"/>
    </location>
</feature>
<feature type="region of interest" description="Interaction with calmodulin" evidence="28">
    <location>
        <begin position="767"/>
        <end position="801"/>
    </location>
</feature>
<feature type="region of interest" description="Required for PIP2-mediated channel inhibition" evidence="15">
    <location>
        <begin position="777"/>
        <end position="792"/>
    </location>
</feature>
<feature type="short sequence motif" description="Selectivity filter" evidence="36">
    <location>
        <begin position="643"/>
        <end position="646"/>
    </location>
</feature>
<feature type="binding site" evidence="38">
    <location>
        <position position="115"/>
    </location>
    <ligand>
        <name>ATP</name>
        <dbReference type="ChEBI" id="CHEBI:30616"/>
    </ligand>
</feature>
<feature type="binding site" evidence="38">
    <location>
        <position position="155"/>
    </location>
    <ligand>
        <name>ATP</name>
        <dbReference type="ChEBI" id="CHEBI:30616"/>
    </ligand>
</feature>
<feature type="binding site" evidence="37 38">
    <location>
        <position position="160"/>
    </location>
    <ligand>
        <name>ATP</name>
        <dbReference type="ChEBI" id="CHEBI:30616"/>
    </ligand>
</feature>
<feature type="binding site" evidence="37 38">
    <location>
        <position position="164"/>
    </location>
    <ligand>
        <name>ATP</name>
        <dbReference type="ChEBI" id="CHEBI:30616"/>
    </ligand>
</feature>
<feature type="binding site" evidence="37 38">
    <location>
        <begin position="199"/>
        <end position="202"/>
    </location>
    <ligand>
        <name>ATP</name>
        <dbReference type="ChEBI" id="CHEBI:30616"/>
    </ligand>
</feature>
<feature type="binding site" evidence="38">
    <location>
        <begin position="210"/>
        <end position="211"/>
    </location>
    <ligand>
        <name>ATP</name>
        <dbReference type="ChEBI" id="CHEBI:30616"/>
    </ligand>
</feature>
<feature type="binding site" evidence="31 43">
    <location>
        <begin position="511"/>
        <end position="512"/>
    </location>
    <ligand>
        <name>resiniferatoxin</name>
        <dbReference type="ChEBI" id="CHEBI:8809"/>
        <note>agonist</note>
    </ligand>
</feature>
<feature type="binding site" evidence="31 43">
    <location>
        <position position="550"/>
    </location>
    <ligand>
        <name>resiniferatoxin</name>
        <dbReference type="ChEBI" id="CHEBI:8809"/>
        <note>agonist</note>
    </ligand>
</feature>
<feature type="binding site" evidence="31 43">
    <location>
        <position position="557"/>
    </location>
    <ligand>
        <name>resiniferatoxin</name>
        <dbReference type="ChEBI" id="CHEBI:8809"/>
        <note>agonist</note>
    </ligand>
</feature>
<feature type="binding site" evidence="2">
    <location>
        <position position="643"/>
    </location>
    <ligand>
        <name>Na(+)</name>
        <dbReference type="ChEBI" id="CHEBI:29101"/>
        <label>1</label>
        <note>ligand shared among four neighboring subunits</note>
    </ligand>
</feature>
<feature type="binding site" evidence="2">
    <location>
        <position position="643"/>
    </location>
    <ligand>
        <name>Na(+)</name>
        <dbReference type="ChEBI" id="CHEBI:29101"/>
        <label>2</label>
        <note>ligand shared among four neighboring subunits</note>
    </ligand>
</feature>
<feature type="binding site" evidence="3">
    <location>
        <position position="646"/>
    </location>
    <ligand>
        <name>Ca(2+)</name>
        <dbReference type="ChEBI" id="CHEBI:29108"/>
        <note>ligand shared between two neighboring subunits</note>
    </ligand>
</feature>
<feature type="modified residue" description="Phosphoserine; by PKA and PKD" evidence="13 23">
    <location>
        <position position="116"/>
    </location>
</feature>
<feature type="modified residue" description="Phosphothreonine; by PKA; in vitro" evidence="13">
    <location>
        <position position="144"/>
    </location>
</feature>
<feature type="modified residue" description="Phosphothreonine; by PKA; in vitro" evidence="13">
    <location>
        <position position="370"/>
    </location>
</feature>
<feature type="modified residue" description="Phosphoserine; by PKC/PRKCE" evidence="11 13 18">
    <location>
        <position position="502"/>
    </location>
</feature>
<feature type="modified residue" description="Phosphothreonine" evidence="18">
    <location>
        <position position="704"/>
    </location>
</feature>
<feature type="modified residue" description="Phosphoserine; by PKA; in vitro" evidence="13">
    <location>
        <position position="774"/>
    </location>
</feature>
<feature type="modified residue" description="Phosphoserine; by PKC/PRKCE and PKC/PRKCZ" evidence="11">
    <location>
        <position position="800"/>
    </location>
</feature>
<feature type="modified residue" description="Phosphoserine; by PKA; in vitro" evidence="13">
    <location>
        <position position="820"/>
    </location>
</feature>
<feature type="glycosylation site" description="N-linked (GlcNAc...) asparagine" evidence="10">
    <location>
        <position position="604"/>
    </location>
</feature>
<feature type="splice variant" id="VSP_013431" description="In isoform 3." evidence="33">
    <location>
        <begin position="1"/>
        <end position="307"/>
    </location>
</feature>
<feature type="splice variant" id="VSP_013432" description="In isoform 2 and isoform 3." evidence="33 34">
    <location>
        <begin position="348"/>
        <end position="407"/>
    </location>
</feature>
<feature type="mutagenesis site" description="Abolishes capsaicin-evoked current and binding to resiniferatoxin." evidence="14">
    <original>R</original>
    <variation>E</variation>
    <location>
        <position position="114"/>
    </location>
</feature>
<feature type="mutagenesis site" description="Abolishes sensitivity to acid." evidence="14">
    <location>
        <position position="114"/>
    </location>
</feature>
<feature type="mutagenesis site" description="Abolishes capsaicin-evoked current and binding to resiniferatoxin." evidence="14">
    <original>R</original>
    <variation>D</variation>
    <location>
        <position position="115"/>
    </location>
</feature>
<feature type="mutagenesis site" description="Abolishes phosphorylation by PKCM and enhances channel response to capsaicin by PKCM." evidence="23">
    <original>S</original>
    <variation>A</variation>
    <location>
        <position position="116"/>
    </location>
</feature>
<feature type="mutagenesis site" description="Abolishes ATP binding. Abolishes CALM binding. Impairs normal desensitization by repeated exposure to capsaicin." evidence="25 28">
    <original>K</original>
    <variation>A</variation>
    <location>
        <position position="155"/>
    </location>
</feature>
<feature type="mutagenesis site" description="Abolishes ATP binding. Abolishes CALM binding." evidence="25">
    <original>K</original>
    <variation>A</variation>
    <location>
        <position position="160"/>
    </location>
</feature>
<feature type="mutagenesis site" description="Strongly reduces affinity for ATP; when associated with A-202." evidence="25">
    <original>Y</original>
    <variation>A</variation>
    <location>
        <position position="199"/>
    </location>
</feature>
<feature type="mutagenesis site" description="Strongly reduces affinity for ATP; when associated with A-199." evidence="25">
    <original>Q</original>
    <variation>A</variation>
    <location>
        <position position="202"/>
    </location>
</feature>
<feature type="mutagenesis site" description="Largely reduces PMA enhancement of capsaicin-evoked currents, but no effect on direct activation by PMA. Loss of activation by capsaicin and loss of vanilloid binding; when associated with I-704." evidence="11 17 18">
    <original>S</original>
    <variation>A</variation>
    <location>
        <position position="502"/>
    </location>
</feature>
<feature type="mutagenesis site" description="Loss of sensitivity to capsaicin." evidence="19">
    <original>Y</original>
    <variation>A</variation>
    <location>
        <position position="511"/>
    </location>
</feature>
<feature type="mutagenesis site" description="Reduces binding to resiniferatoxin." evidence="19">
    <original>M</original>
    <variation>L</variation>
    <location>
        <position position="547"/>
    </location>
</feature>
<feature type="mutagenesis site" description="Reduces sensitivity to capsaicin 10-fold; no effect on sensitivity to resiniferatoxin. Reduces binding to resiniferatoxin." evidence="19">
    <original>T</original>
    <variation>I</variation>
    <location>
        <position position="550"/>
    </location>
</feature>
<feature type="mutagenesis site" description="Abolishes channel activity. Restored channel activity; when associated with E-639." evidence="6">
    <original>E</original>
    <variation>K</variation>
    <location>
        <position position="636"/>
    </location>
</feature>
<feature type="mutagenesis site" description="Slight modification of pore attributes." evidence="6">
    <original>E</original>
    <variation>Q</variation>
    <location>
        <position position="636"/>
    </location>
</feature>
<feature type="mutagenesis site" description="Restored channel activity; when associated with K-636." evidence="6">
    <original>K</original>
    <variation>E</variation>
    <location>
        <position position="639"/>
    </location>
</feature>
<feature type="mutagenesis site" description="Slightly modifies channel permeability." evidence="6">
    <original>M</original>
    <variation>Y</variation>
    <location>
        <position position="644"/>
    </location>
</feature>
<feature type="mutagenesis site" description="Strongly reduces the affinity for pore blocker ruthenium red and lowered channel permeability for Mg(2+)." evidence="6">
    <original>D</original>
    <variation>N</variation>
    <location>
        <position position="646"/>
    </location>
</feature>
<feature type="mutagenesis site" description="Minor modification of pore attributes." evidence="6">
    <original>E</original>
    <variation>Q</variation>
    <location>
        <position position="648"/>
    </location>
</feature>
<feature type="mutagenesis site" description="Minor modification of pore attributes." evidence="6">
    <original>E</original>
    <variation>Q</variation>
    <location>
        <position position="651"/>
    </location>
</feature>
<feature type="mutagenesis site" description="No effect on PMA-induced enhancement of capsaicin-evoked currents but reduces direct activation by PMA." evidence="17 18">
    <original>T</original>
    <variation>A</variation>
    <location>
        <position position="704"/>
    </location>
</feature>
<feature type="mutagenesis site" description="Loss of activation by capsaicin and loss of vanilloid binding; when associated with A-502." evidence="17 18">
    <original>T</original>
    <variation>I</variation>
    <location>
        <position position="704"/>
    </location>
</feature>
<feature type="mutagenesis site" description="Abolishes capsaiin-evoked current and binding to resiniferatoxin." evidence="14">
    <original>E</original>
    <variation>K</variation>
    <variation>Q</variation>
    <location>
        <position position="761"/>
    </location>
</feature>
<feature type="mutagenesis site" description="Abolishes sensitivity to acid." evidence="14">
    <location>
        <position position="761"/>
    </location>
</feature>
<feature type="mutagenesis site" description="Strongly reduces CALM-binding and abolishes PLC-mediated channel activity; when associated with Q-788." evidence="15 28">
    <original>R</original>
    <variation>Q</variation>
    <location>
        <position position="785"/>
    </location>
</feature>
<feature type="mutagenesis site" description="Reduces CALM-binding. Reduces desensitization by repeated exposure to capsaicin." evidence="28">
    <original>W</original>
    <variation>R</variation>
    <location>
        <position position="787"/>
    </location>
</feature>
<feature type="mutagenesis site" description="Strongly reduces CALM-binding and abolishes PLC-mediated channel activity; when associated with Q-785 or Q-797." evidence="15 28">
    <original>K</original>
    <variation>Q</variation>
    <location>
        <position position="788"/>
    </location>
</feature>
<feature type="mutagenesis site" description="Abolishes PLC-mediated channel activity; when associated with Q-788." evidence="15">
    <original>R</original>
    <variation>Q</variation>
    <location>
        <position position="797"/>
    </location>
</feature>
<feature type="mutagenesis site" description="Largely reduces direct activation of by PMA and PMA-induced currents; no effect on receptor kinase-induced currents." evidence="11 15 17">
    <original>S</original>
    <variation>A</variation>
    <location>
        <position position="800"/>
    </location>
</feature>
<feature type="sequence conflict" description="In Ref. 3; BAA94307." evidence="35" ref="3">
    <original>E</original>
    <variation>D</variation>
    <location>
        <position position="18"/>
    </location>
</feature>
<feature type="sequence conflict" description="In Ref. 4; AAK83151." evidence="35" ref="4">
    <original>V</original>
    <variation>A</variation>
    <location>
        <position position="36"/>
    </location>
</feature>
<feature type="sequence conflict" description="In Ref. 3; BAA94306." evidence="35" ref="3">
    <original>R</original>
    <variation>G</variation>
    <location>
        <position position="48"/>
    </location>
</feature>
<feature type="sequence conflict" description="In Ref. 3; BAA94306." evidence="35" ref="3">
    <original>G</original>
    <variation>W</variation>
    <location>
        <position position="51"/>
    </location>
</feature>
<feature type="sequence conflict" description="In Ref. 3; BAA94307." evidence="35" ref="3">
    <original>P</original>
    <variation>Q</variation>
    <location>
        <position position="96"/>
    </location>
</feature>
<feature type="sequence conflict" description="In Ref. 4; AAK83151." evidence="35" ref="4">
    <original>V</original>
    <variation>I</variation>
    <location>
        <position position="179"/>
    </location>
</feature>
<feature type="sequence conflict" description="In Ref. 3; BAA94306." evidence="35" ref="3">
    <original>K</original>
    <variation>Q</variation>
    <location>
        <position position="735"/>
    </location>
</feature>
<feature type="helix" evidence="52">
    <location>
        <begin position="114"/>
        <end position="123"/>
    </location>
</feature>
<feature type="helix" evidence="52">
    <location>
        <begin position="127"/>
        <end position="129"/>
    </location>
</feature>
<feature type="helix" evidence="52">
    <location>
        <begin position="132"/>
        <end position="139"/>
    </location>
</feature>
<feature type="turn" evidence="52">
    <location>
        <begin position="146"/>
        <end position="148"/>
    </location>
</feature>
<feature type="turn" evidence="52">
    <location>
        <begin position="151"/>
        <end position="153"/>
    </location>
</feature>
<feature type="helix" evidence="52">
    <location>
        <begin position="157"/>
        <end position="162"/>
    </location>
</feature>
<feature type="helix" evidence="52">
    <location>
        <begin position="172"/>
        <end position="183"/>
    </location>
</feature>
<feature type="turn" evidence="59">
    <location>
        <begin position="187"/>
        <end position="191"/>
    </location>
</feature>
<feature type="turn" evidence="59">
    <location>
        <begin position="197"/>
        <end position="201"/>
    </location>
</feature>
<feature type="helix" evidence="59">
    <location>
        <begin position="204"/>
        <end position="210"/>
    </location>
</feature>
<feature type="helix" evidence="59">
    <location>
        <begin position="214"/>
        <end position="222"/>
    </location>
</feature>
<feature type="strand" evidence="56">
    <location>
        <begin position="227"/>
        <end position="229"/>
    </location>
</feature>
<feature type="helix" evidence="59">
    <location>
        <begin position="234"/>
        <end position="236"/>
    </location>
</feature>
<feature type="strand" evidence="59">
    <location>
        <begin position="237"/>
        <end position="243"/>
    </location>
</feature>
<feature type="helix" evidence="59">
    <location>
        <begin position="251"/>
        <end position="257"/>
    </location>
</feature>
<feature type="helix" evidence="59">
    <location>
        <begin position="261"/>
        <end position="268"/>
    </location>
</feature>
<feature type="strand" evidence="59">
    <location>
        <begin position="271"/>
        <end position="273"/>
    </location>
</feature>
<feature type="strand" evidence="55">
    <location>
        <begin position="277"/>
        <end position="279"/>
    </location>
</feature>
<feature type="strand" evidence="57">
    <location>
        <begin position="282"/>
        <end position="284"/>
    </location>
</feature>
<feature type="helix" evidence="59">
    <location>
        <begin position="287"/>
        <end position="294"/>
    </location>
</feature>
<feature type="helix" evidence="59">
    <location>
        <begin position="299"/>
        <end position="319"/>
    </location>
</feature>
<feature type="strand" evidence="54">
    <location>
        <begin position="321"/>
        <end position="323"/>
    </location>
</feature>
<feature type="helix" evidence="59">
    <location>
        <begin position="325"/>
        <end position="327"/>
    </location>
</feature>
<feature type="helix" evidence="59">
    <location>
        <begin position="336"/>
        <end position="343"/>
    </location>
</feature>
<feature type="helix" evidence="59">
    <location>
        <begin position="346"/>
        <end position="353"/>
    </location>
</feature>
<feature type="turn" evidence="46">
    <location>
        <begin position="356"/>
        <end position="358"/>
    </location>
</feature>
<feature type="turn" evidence="52">
    <location>
        <begin position="360"/>
        <end position="362"/>
    </location>
</feature>
<feature type="helix" evidence="59">
    <location>
        <begin position="363"/>
        <end position="365"/>
    </location>
</feature>
<feature type="strand" evidence="59">
    <location>
        <begin position="367"/>
        <end position="374"/>
    </location>
</feature>
<feature type="strand" evidence="59">
    <location>
        <begin position="377"/>
        <end position="383"/>
    </location>
</feature>
<feature type="turn" evidence="59">
    <location>
        <begin position="385"/>
        <end position="387"/>
    </location>
</feature>
<feature type="turn" evidence="50">
    <location>
        <begin position="388"/>
        <end position="390"/>
    </location>
</feature>
<feature type="strand" evidence="53">
    <location>
        <begin position="391"/>
        <end position="393"/>
    </location>
</feature>
<feature type="helix" evidence="59">
    <location>
        <begin position="395"/>
        <end position="400"/>
    </location>
</feature>
<feature type="turn" evidence="59">
    <location>
        <begin position="407"/>
        <end position="411"/>
    </location>
</feature>
<feature type="helix" evidence="59">
    <location>
        <begin position="412"/>
        <end position="414"/>
    </location>
</feature>
<feature type="helix" evidence="59">
    <location>
        <begin position="416"/>
        <end position="453"/>
    </location>
</feature>
<feature type="strand" evidence="59">
    <location>
        <begin position="458"/>
        <end position="462"/>
    </location>
</feature>
<feature type="helix" evidence="59">
    <location>
        <begin position="469"/>
        <end position="499"/>
    </location>
</feature>
<feature type="helix" evidence="47">
    <location>
        <begin position="501"/>
        <end position="504"/>
    </location>
</feature>
<feature type="helix" evidence="59">
    <location>
        <begin position="505"/>
        <end position="508"/>
    </location>
</feature>
<feature type="helix" evidence="59">
    <location>
        <begin position="511"/>
        <end position="531"/>
    </location>
</feature>
<feature type="helix" evidence="59">
    <location>
        <begin position="537"/>
        <end position="550"/>
    </location>
</feature>
<feature type="helix" evidence="59">
    <location>
        <begin position="551"/>
        <end position="556"/>
    </location>
</feature>
<feature type="helix" evidence="59">
    <location>
        <begin position="560"/>
        <end position="574"/>
    </location>
</feature>
<feature type="helix" evidence="59">
    <location>
        <begin position="576"/>
        <end position="598"/>
    </location>
</feature>
<feature type="strand" evidence="52">
    <location>
        <begin position="601"/>
        <end position="603"/>
    </location>
</feature>
<feature type="strand" evidence="49">
    <location>
        <begin position="627"/>
        <end position="629"/>
    </location>
</feature>
<feature type="helix" evidence="59">
    <location>
        <begin position="630"/>
        <end position="641"/>
    </location>
</feature>
<feature type="strand" evidence="50">
    <location>
        <begin position="647"/>
        <end position="649"/>
    </location>
</feature>
<feature type="strand" evidence="51">
    <location>
        <begin position="652"/>
        <end position="654"/>
    </location>
</feature>
<feature type="helix" evidence="59">
    <location>
        <begin position="656"/>
        <end position="670"/>
    </location>
</feature>
<feature type="turn" evidence="59">
    <location>
        <begin position="671"/>
        <end position="673"/>
    </location>
</feature>
<feature type="helix" evidence="59">
    <location>
        <begin position="674"/>
        <end position="688"/>
    </location>
</feature>
<feature type="helix" evidence="59">
    <location>
        <begin position="690"/>
        <end position="710"/>
    </location>
</feature>
<feature type="strand" evidence="58">
    <location>
        <begin position="713"/>
        <end position="715"/>
    </location>
</feature>
<feature type="strand" evidence="53">
    <location>
        <begin position="717"/>
        <end position="720"/>
    </location>
</feature>
<feature type="strand" evidence="59">
    <location>
        <begin position="722"/>
        <end position="730"/>
    </location>
</feature>
<feature type="strand" evidence="59">
    <location>
        <begin position="732"/>
        <end position="734"/>
    </location>
</feature>
<feature type="strand" evidence="59">
    <location>
        <begin position="736"/>
        <end position="747"/>
    </location>
</feature>
<feature type="strand" evidence="54">
    <location>
        <begin position="749"/>
        <end position="751"/>
    </location>
</feature>
<feature type="strand" evidence="52">
    <location>
        <begin position="758"/>
        <end position="760"/>
    </location>
</feature>
<feature type="helix" evidence="48">
    <location>
        <begin position="788"/>
        <end position="792"/>
    </location>
</feature>
<feature type="helix" evidence="48">
    <location>
        <begin position="793"/>
        <end position="795"/>
    </location>
</feature>
<comment type="function">
    <text evidence="2 7 8 9 12 13 15 16 17 18 21 25 26 27 28 29 32">Non-selective calcium permeant cation channel involved in detection of noxious chemical and thermal stimuli. Seems to mediate proton influx and may be involved in intracellular acidosis in nociceptive neurons. Involved in mediation of inflammatory pain and hyperalgesia. Sensitized by a phosphatidylinositol second messenger system activated by receptor tyrosine kinases, which involves PKC isozymes and PCL. Activation by vanilloids, like capsaicin, and temperatures higher than 42 degrees Celsius (By similarity). Upon activation, exhibits a time- and Ca(2+)-dependent outward rectification, followed by a long-lasting refractory state. Mild extracellular acidic pH (6.5) potentiates channel activation by noxious heat and vanilloids, whereas acidic conditions (pH &lt;6) directly activate the channel. Can be activated by endogenous compounds, including 12-hydroperoxytetraenoic acid and bradykinin. Acts as ionotropic endocannabinoid receptor with central neuromodulatory effects. Triggers a form of long-term depression (TRPV1-LTD) mediated by the endocannabinoid anandamine in the hippocampus and nucleus accumbens by affecting AMPA receptors endocytosis.</text>
</comment>
<comment type="function">
    <molecule>Isoform 3</molecule>
    <text evidence="5">Does not display channel activity in response to noxious chemical compounds, such as capsaicin and the vanilloid resiniferatoxin. Channel activity is not elicited by mildly acidic extracellular pH, and only slight channel activity is observed in response to noxiuos heat stimuli.</text>
</comment>
<comment type="catalytic activity">
    <reaction evidence="7 12 13 17 32">
        <text>Ca(2+)(in) = Ca(2+)(out)</text>
        <dbReference type="Rhea" id="RHEA:29671"/>
        <dbReference type="ChEBI" id="CHEBI:29108"/>
    </reaction>
</comment>
<comment type="catalytic activity">
    <reaction evidence="32">
        <text>Mg(2+)(in) = Mg(2+)(out)</text>
        <dbReference type="Rhea" id="RHEA:29827"/>
        <dbReference type="ChEBI" id="CHEBI:18420"/>
    </reaction>
</comment>
<comment type="catalytic activity">
    <reaction evidence="32">
        <text>Na(+)(in) = Na(+)(out)</text>
        <dbReference type="Rhea" id="RHEA:34963"/>
        <dbReference type="ChEBI" id="CHEBI:29101"/>
    </reaction>
</comment>
<comment type="catalytic activity">
    <reaction evidence="32">
        <text>K(+)(in) = K(+)(out)</text>
        <dbReference type="Rhea" id="RHEA:29463"/>
        <dbReference type="ChEBI" id="CHEBI:29103"/>
    </reaction>
</comment>
<comment type="activity regulation">
    <text evidence="1 25 26 28">Channel activity is activated via the interaction with PIRT and phosphatidylinositol 4,5-bisphosphate (PIP2). Both PIRT and PIP2 are required to activate channel activity (By similarity). The channel is sensitized by ATP binding. Repeated stimulation with capsaicin gives rise to progressively smaller responses, due to desensitization. This desensitization is triggered by the influx of calcium ions and is inhibited by elevated ATP levels. Ca(2+) and CALM displace ATP from its binding site and trigger a conformation change that leads to a closed, desensitized channel. Intracellular PIP2 inhibits desensitization. The double-knot toxin (DkTx) from the Chinese earth tiger tarantula activates the channel and traps it in an open conformation. The Scolopendra mutilans RhTx toxin potentiates the heat activation pathway mediated by this channel by binding to the charge-rich outer pore region (in an activated state) (By similarity).</text>
</comment>
<comment type="subunit">
    <text evidence="1 2 8 16 20 22 23 28 29 30 31">Homotetramer (PubMed:15190102, PubMed:24305160, PubMed:24305161, PubMed:27281200). Interacts with PIRT (By similarity). May also form a heteromeric channel with TRPV3 (By similarity). Interacts with CALM, PRKCM and CSK (PubMed:12808128, PubMed:15084474, PubMed:15471852, PubMed:17582331). Interacts with PRKCG and NTRK1, probably by forming a trimeric complex (PubMed:11418861). Interacts with the Scolopendra mutilans RhTx toxin (By similarity). Interacts with the spider Tau-theraphotoxin-Hs1a (PubMed:27281200). Interacts with TMEM100 (By similarity). Interacts with PACS2 (By similarity).</text>
</comment>
<comment type="interaction">
    <interactant intactId="EBI-2794004">
        <id>O35433</id>
    </interactant>
    <interactant intactId="EBI-2794004">
        <id>O35433</id>
        <label>Trpv1</label>
    </interactant>
    <organismsDiffer>false</organismsDiffer>
    <experiments>11</experiments>
</comment>
<comment type="interaction">
    <interactant intactId="EBI-2794004">
        <id>O35433</id>
    </interactant>
    <interactant intactId="EBI-2793994">
        <id>P0CH43</id>
    </interactant>
    <organismsDiffer>true</organismsDiffer>
    <experiments>2</experiments>
</comment>
<comment type="interaction">
    <interactant intactId="EBI-15703031">
        <id>O35433-1</id>
    </interactant>
    <interactant intactId="EBI-15703031">
        <id>O35433-1</id>
        <label>Trpv1</label>
    </interactant>
    <organismsDiffer>false</organismsDiffer>
    <experiments>3</experiments>
</comment>
<comment type="subcellular location">
    <subcellularLocation>
        <location evidence="24">Postsynaptic cell membrane</location>
        <topology evidence="2">Multi-pass membrane protein</topology>
    </subcellularLocation>
    <subcellularLocation>
        <location evidence="24">Cell projection</location>
        <location evidence="24">Dendritic spine membrane</location>
        <topology evidence="2">Multi-pass membrane protein</topology>
    </subcellularLocation>
    <subcellularLocation>
        <location evidence="9 24 32">Cell membrane</location>
        <topology evidence="29 30 31">Multi-pass membrane protein</topology>
    </subcellularLocation>
    <text evidence="24">Mostly, but not exclusively expressed in postsynaptic dendritic spines.</text>
</comment>
<comment type="alternative products">
    <event type="alternative splicing"/>
    <isoform>
        <id>O35433-1</id>
        <name>1</name>
        <name>VR1L1</name>
        <sequence type="displayed"/>
    </isoform>
    <isoform>
        <id>O35433-2</id>
        <name>2</name>
        <name>VR1L2</name>
        <sequence type="described" ref="VSP_013432"/>
    </isoform>
    <isoform>
        <id>O35433-3</id>
        <name>3</name>
        <name>VR.5'sv</name>
        <sequence type="described" ref="VSP_013431 VSP_013432"/>
    </isoform>
</comment>
<comment type="tissue specificity">
    <text evidence="5 24 32">Predominantly expressed in trigeminal and dorsal root sensory ganglia. Expressed also in hippocampus, cortex, cerebellum, olfactory bulb, mesencephalon and hindbrain. High expression in the cell bodies and dendrites of neurons in the hippocampus and in the cortex. In the brain detected also in astrocytes and pericytes (at protein level) (PubMed:15857679). Isoform 1 and isoform 3 are expressed in brain and peripheral blood mononuclear cells.</text>
</comment>
<comment type="domain">
    <text evidence="22">The association domain (AD) is necessary for self-association.</text>
</comment>
<comment type="PTM">
    <text evidence="11 13 18 23">Phosphorylation by PKA reverses capsaicin-induced dephosphorylation at multiple sites, probably including Ser-116 as a major phosphorylation site. Phosphorylation by CAMKII seems to regulate binding to vanilloids. Phosphorylated and modulated by PRKCE, PRKCM and probably PRKCZ. Dephosphorylation by calcineurin seems to lead to receptor desensitization and phosphorylation by CAMKII recovers activity.</text>
</comment>
<comment type="miscellaneous">
    <text>Responses evoked by capsaicin, but not by low pH and heat, can be antagonized by capsazepine.</text>
</comment>
<comment type="miscellaneous">
    <molecule>Isoform 3</molecule>
    <text evidence="35">Inactive.</text>
</comment>
<comment type="similarity">
    <text evidence="35">Belongs to the transient receptor (TC 1.A.4) family. TrpV subfamily. TRPV1 sub-subfamily.</text>
</comment>
<organism>
    <name type="scientific">Rattus norvegicus</name>
    <name type="common">Rat</name>
    <dbReference type="NCBI Taxonomy" id="10116"/>
    <lineage>
        <taxon>Eukaryota</taxon>
        <taxon>Metazoa</taxon>
        <taxon>Chordata</taxon>
        <taxon>Craniata</taxon>
        <taxon>Vertebrata</taxon>
        <taxon>Euteleostomi</taxon>
        <taxon>Mammalia</taxon>
        <taxon>Eutheria</taxon>
        <taxon>Euarchontoglires</taxon>
        <taxon>Glires</taxon>
        <taxon>Rodentia</taxon>
        <taxon>Myomorpha</taxon>
        <taxon>Muroidea</taxon>
        <taxon>Muridae</taxon>
        <taxon>Murinae</taxon>
        <taxon>Rattus</taxon>
    </lineage>
</organism>